<accession>P61978</accession>
<accession>Q07244</accession>
<accession>Q15671</accession>
<accession>Q59F98</accession>
<accession>Q5T6W4</accession>
<accession>Q60577</accession>
<accession>Q6IBN1</accession>
<accession>Q922Y7</accession>
<accession>Q96J62</accession>
<gene>
    <name type="primary">HNRNPK</name>
    <name type="synonym">HNRPK</name>
</gene>
<feature type="chain" id="PRO_0000050096" description="Heterogeneous nuclear ribonucleoprotein K">
    <location>
        <begin position="1"/>
        <end position="463"/>
    </location>
</feature>
<feature type="domain" description="KH 1" evidence="4">
    <location>
        <begin position="42"/>
        <end position="104"/>
    </location>
</feature>
<feature type="repeat" description="1-1">
    <location>
        <begin position="54"/>
        <end position="76"/>
    </location>
</feature>
<feature type="repeat" description="3-1">
    <location>
        <begin position="59"/>
        <end position="62"/>
    </location>
</feature>
<feature type="domain" description="KH 2" evidence="4">
    <location>
        <begin position="144"/>
        <end position="209"/>
    </location>
</feature>
<feature type="repeat" description="2-1">
    <location>
        <begin position="245"/>
        <end position="250"/>
    </location>
</feature>
<feature type="repeat" description="3-2">
    <location>
        <begin position="257"/>
        <end position="260"/>
    </location>
</feature>
<feature type="repeat" description="3-3">
    <location>
        <begin position="267"/>
        <end position="270"/>
    </location>
</feature>
<feature type="repeat" description="3-4">
    <location>
        <begin position="295"/>
        <end position="298"/>
    </location>
</feature>
<feature type="repeat" description="2-2">
    <location>
        <begin position="324"/>
        <end position="329"/>
    </location>
</feature>
<feature type="domain" description="KH 3" evidence="4">
    <location>
        <begin position="387"/>
        <end position="451"/>
    </location>
</feature>
<feature type="repeat" description="1-2">
    <location>
        <begin position="399"/>
        <end position="421"/>
    </location>
</feature>
<feature type="repeat" description="3-5">
    <location>
        <begin position="404"/>
        <end position="407"/>
    </location>
</feature>
<feature type="region of interest" description="Necessary for interaction with DDX1" evidence="9">
    <location>
        <begin position="1"/>
        <end position="276"/>
    </location>
</feature>
<feature type="region of interest" description="Disordered" evidence="5">
    <location>
        <begin position="1"/>
        <end position="37"/>
    </location>
</feature>
<feature type="region of interest" description="Interaction with ASFV p30">
    <location>
        <begin position="35"/>
        <end position="197"/>
    </location>
</feature>
<feature type="region of interest" description="2 X 22 AA approximate repeats">
    <location>
        <begin position="54"/>
        <end position="421"/>
    </location>
</feature>
<feature type="region of interest" description="5 X 4 AA repeats of G-X-G-G">
    <location>
        <begin position="59"/>
        <end position="407"/>
    </location>
</feature>
<feature type="region of interest" description="Interaction with ZIK1" evidence="1">
    <location>
        <begin position="209"/>
        <end position="337"/>
    </location>
</feature>
<feature type="region of interest" description="RNA-binding RGG-box">
    <location>
        <begin position="236"/>
        <end position="273"/>
    </location>
</feature>
<feature type="region of interest" description="2 X 6 AA approximate repeats">
    <location>
        <begin position="245"/>
        <end position="329"/>
    </location>
</feature>
<feature type="region of interest" description="Disordered" evidence="5">
    <location>
        <begin position="250"/>
        <end position="329"/>
    </location>
</feature>
<feature type="compositionally biased region" description="Basic and acidic residues" evidence="5">
    <location>
        <begin position="19"/>
        <end position="37"/>
    </location>
</feature>
<feature type="compositionally biased region" description="Low complexity" evidence="5">
    <location>
        <begin position="252"/>
        <end position="266"/>
    </location>
</feature>
<feature type="compositionally biased region" description="Basic and acidic residues" evidence="5">
    <location>
        <begin position="276"/>
        <end position="285"/>
    </location>
</feature>
<feature type="modified residue" description="N-acetylmethionine" evidence="25 32 36">
    <location>
        <position position="1"/>
    </location>
</feature>
<feature type="modified residue" description="N6-acetyllysine; alternate" evidence="2">
    <location>
        <position position="34"/>
    </location>
</feature>
<feature type="modified residue" description="Phosphoserine" evidence="37">
    <location>
        <position position="36"/>
    </location>
</feature>
<feature type="modified residue" description="Phosphothreonine" evidence="2">
    <location>
        <position position="39"/>
    </location>
</feature>
<feature type="modified residue" description="Phosphoserine" evidence="37 39">
    <location>
        <position position="75"/>
    </location>
</feature>
<feature type="modified residue" description="Phosphoserine" evidence="31 39">
    <location>
        <position position="116"/>
    </location>
</feature>
<feature type="modified residue" description="N6-acetyllysine" evidence="2">
    <location>
        <position position="198"/>
    </location>
</feature>
<feature type="modified residue" description="Phosphoserine" evidence="35">
    <location>
        <position position="214"/>
    </location>
</feature>
<feature type="modified residue" description="Phosphoserine" evidence="29 31 33 34 35 37">
    <location>
        <position position="216"/>
    </location>
</feature>
<feature type="modified residue" description="N6-succinyllysine; alternate" evidence="2">
    <location>
        <position position="219"/>
    </location>
</feature>
<feature type="modified residue" description="Phosphoserine" evidence="11 30 31 34 35 37 39">
    <location>
        <position position="284"/>
    </location>
</feature>
<feature type="modified residue" description="Omega-N-methylarginine" evidence="38">
    <location>
        <position position="316"/>
    </location>
</feature>
<feature type="modified residue" description="Omega-N-methylarginine" evidence="2">
    <location>
        <position position="377"/>
    </location>
</feature>
<feature type="modified residue" description="Phosphoserine" evidence="29 34 35 37">
    <location>
        <position position="379"/>
    </location>
</feature>
<feature type="modified residue" description="Phosphotyrosine" evidence="33">
    <location>
        <position position="380"/>
    </location>
</feature>
<feature type="modified residue" description="N6-acetyllysine; alternate" evidence="2">
    <location>
        <position position="405"/>
    </location>
</feature>
<feature type="modified residue" description="Phosphoserine" evidence="37">
    <location>
        <position position="420"/>
    </location>
</feature>
<feature type="cross-link" description="Glycyl lysine isopeptide (Lys-Gly) (interchain with G-Cter in SUMO1); alternate" evidence="40">
    <location>
        <position position="34"/>
    </location>
</feature>
<feature type="cross-link" description="Glycyl lysine isopeptide (Lys-Gly) (interchain with G-Cter in SUMO2); alternate" evidence="40 41 43">
    <location>
        <position position="34"/>
    </location>
</feature>
<feature type="cross-link" description="Glycyl lysine isopeptide (Lys-Gly) (interchain with G-Cter in SUMO2)" evidence="43">
    <location>
        <position position="52"/>
    </location>
</feature>
<feature type="cross-link" description="Glycyl lysine isopeptide (Lys-Gly) (interchain with G-Cter in SUMO2)" evidence="43">
    <location>
        <position position="60"/>
    </location>
</feature>
<feature type="cross-link" description="Glycyl lysine isopeptide (Lys-Gly) (interchain with G-Cter in SUMO1); alternate" evidence="40">
    <location>
        <position position="163"/>
    </location>
</feature>
<feature type="cross-link" description="Glycyl lysine isopeptide (Lys-Gly) (interchain with G-Cter in SUMO2); alternate" evidence="43">
    <location>
        <position position="163"/>
    </location>
</feature>
<feature type="cross-link" description="Glycyl lysine isopeptide (Lys-Gly) (interchain with G-Cter in SUMO2); alternate" evidence="43">
    <location>
        <position position="219"/>
    </location>
</feature>
<feature type="cross-link" description="Glycyl lysine isopeptide (Lys-Gly) (interchain with G-Cter in SUMO2); alternate" evidence="41 43">
    <location>
        <position position="405"/>
    </location>
</feature>
<feature type="cross-link" description="Glycyl lysine isopeptide (Lys-Gly) (interchain with G-Cter in SUMO); alternate">
    <location>
        <position position="422"/>
    </location>
</feature>
<feature type="cross-link" description="Glycyl lysine isopeptide (Lys-Gly) (interchain with G-Cter in SUMO1); alternate" evidence="40">
    <location>
        <position position="422"/>
    </location>
</feature>
<feature type="cross-link" description="Glycyl lysine isopeptide (Lys-Gly) (interchain with G-Cter in SUMO2); alternate" evidence="40 41 42 43">
    <location>
        <position position="422"/>
    </location>
</feature>
<feature type="splice variant" id="VSP_021669" description="In isoform 3." evidence="27">
    <location>
        <begin position="111"/>
        <end position="134"/>
    </location>
</feature>
<feature type="splice variant" id="VSP_002822" description="In isoform 2 and isoform 3." evidence="26 27">
    <original>SGKFF</original>
    <variation>ADVEGF</variation>
    <location>
        <begin position="459"/>
        <end position="463"/>
    </location>
</feature>
<feature type="mutagenesis site" description="Loss of sumoylation. Loss of TP53 transcriptional stimulation." evidence="16">
    <original>K</original>
    <variation>R</variation>
    <location>
        <position position="422"/>
    </location>
</feature>
<feature type="mutagenesis site" description="Loss of sumoylation." evidence="16">
    <original>D</original>
    <variation>A</variation>
    <location>
        <position position="424"/>
    </location>
</feature>
<feature type="sequence conflict" description="In Ref. 2; CAA51267." evidence="28" ref="2">
    <original>A</original>
    <variation>D</variation>
    <location>
        <position position="32"/>
    </location>
</feature>
<feature type="strand" evidence="44">
    <location>
        <begin position="377"/>
        <end position="380"/>
    </location>
</feature>
<feature type="helix" evidence="44">
    <location>
        <begin position="381"/>
        <end position="384"/>
    </location>
</feature>
<feature type="strand" evidence="45">
    <location>
        <begin position="388"/>
        <end position="395"/>
    </location>
</feature>
<feature type="turn" evidence="45">
    <location>
        <begin position="396"/>
        <end position="398"/>
    </location>
</feature>
<feature type="helix" evidence="45">
    <location>
        <begin position="399"/>
        <end position="402"/>
    </location>
</feature>
<feature type="helix" evidence="45">
    <location>
        <begin position="405"/>
        <end position="407"/>
    </location>
</feature>
<feature type="helix" evidence="45">
    <location>
        <begin position="408"/>
        <end position="417"/>
    </location>
</feature>
<feature type="strand" evidence="45">
    <location>
        <begin position="420"/>
        <end position="423"/>
    </location>
</feature>
<feature type="strand" evidence="45">
    <location>
        <begin position="430"/>
        <end position="439"/>
    </location>
</feature>
<feature type="helix" evidence="45">
    <location>
        <begin position="441"/>
        <end position="459"/>
    </location>
</feature>
<organism>
    <name type="scientific">Homo sapiens</name>
    <name type="common">Human</name>
    <dbReference type="NCBI Taxonomy" id="9606"/>
    <lineage>
        <taxon>Eukaryota</taxon>
        <taxon>Metazoa</taxon>
        <taxon>Chordata</taxon>
        <taxon>Craniata</taxon>
        <taxon>Vertebrata</taxon>
        <taxon>Euteleostomi</taxon>
        <taxon>Mammalia</taxon>
        <taxon>Eutheria</taxon>
        <taxon>Euarchontoglires</taxon>
        <taxon>Primates</taxon>
        <taxon>Haplorrhini</taxon>
        <taxon>Catarrhini</taxon>
        <taxon>Hominidae</taxon>
        <taxon>Homo</taxon>
    </lineage>
</organism>
<proteinExistence type="evidence at protein level"/>
<reference key="1">
    <citation type="journal article" date="1992" name="Mol. Cell. Biol.">
        <title>Characterization and primary structure of the poly(C)-binding heterogeneous nuclear ribonucleoprotein complex K protein.</title>
        <authorList>
            <person name="Matunis M.J."/>
            <person name="Michael W.M."/>
            <person name="Dreyfuss G."/>
        </authorList>
    </citation>
    <scope>NUCLEOTIDE SEQUENCE [MRNA] (ISOFORM 1)</scope>
    <scope>SUBCELLULAR LOCATION</scope>
</reference>
<reference key="2">
    <citation type="journal article" date="1994" name="J. Mol. Biol.">
        <title>Identification, molecular cloning, expression and chromosome mapping of a family of transformation upregulated hnRNP-K proteins derived by alternative splicing.</title>
        <authorList>
            <person name="Dejgaard K."/>
            <person name="Leffers H."/>
            <person name="Rasmussen H.H."/>
            <person name="Madsen P."/>
            <person name="Kruse T.A."/>
            <person name="Gesser B."/>
            <person name="Nielsen H."/>
            <person name="Celis J.E."/>
        </authorList>
    </citation>
    <scope>NUCLEOTIDE SEQUENCE [MRNA] (ISOFORM 1)</scope>
    <scope>PHOSPHORYLATION</scope>
</reference>
<reference key="3">
    <citation type="submission" date="2004-06" db="EMBL/GenBank/DDBJ databases">
        <title>Cloning of human full open reading frames in Gateway(TM) system entry vector (pDONR201).</title>
        <authorList>
            <person name="Ebert L."/>
            <person name="Schick M."/>
            <person name="Neubert P."/>
            <person name="Schatten R."/>
            <person name="Henze S."/>
            <person name="Korn B."/>
        </authorList>
    </citation>
    <scope>NUCLEOTIDE SEQUENCE [LARGE SCALE MRNA] (ISOFORM 2)</scope>
</reference>
<reference key="4">
    <citation type="submission" date="2005-03" db="EMBL/GenBank/DDBJ databases">
        <authorList>
            <person name="Totoki Y."/>
            <person name="Toyoda A."/>
            <person name="Takeda T."/>
            <person name="Sakaki Y."/>
            <person name="Tanaka A."/>
            <person name="Yokoyama S."/>
            <person name="Ohara O."/>
            <person name="Nagase T."/>
            <person name="Kikuno R.F."/>
        </authorList>
    </citation>
    <scope>NUCLEOTIDE SEQUENCE [LARGE SCALE MRNA] (ISOFORM 3)</scope>
    <source>
        <tissue>Brain</tissue>
    </source>
</reference>
<reference key="5">
    <citation type="journal article" date="2004" name="Nat. Genet.">
        <title>Complete sequencing and characterization of 21,243 full-length human cDNAs.</title>
        <authorList>
            <person name="Ota T."/>
            <person name="Suzuki Y."/>
            <person name="Nishikawa T."/>
            <person name="Otsuki T."/>
            <person name="Sugiyama T."/>
            <person name="Irie R."/>
            <person name="Wakamatsu A."/>
            <person name="Hayashi K."/>
            <person name="Sato H."/>
            <person name="Nagai K."/>
            <person name="Kimura K."/>
            <person name="Makita H."/>
            <person name="Sekine M."/>
            <person name="Obayashi M."/>
            <person name="Nishi T."/>
            <person name="Shibahara T."/>
            <person name="Tanaka T."/>
            <person name="Ishii S."/>
            <person name="Yamamoto J."/>
            <person name="Saito K."/>
            <person name="Kawai Y."/>
            <person name="Isono Y."/>
            <person name="Nakamura Y."/>
            <person name="Nagahari K."/>
            <person name="Murakami K."/>
            <person name="Yasuda T."/>
            <person name="Iwayanagi T."/>
            <person name="Wagatsuma M."/>
            <person name="Shiratori A."/>
            <person name="Sudo H."/>
            <person name="Hosoiri T."/>
            <person name="Kaku Y."/>
            <person name="Kodaira H."/>
            <person name="Kondo H."/>
            <person name="Sugawara M."/>
            <person name="Takahashi M."/>
            <person name="Kanda K."/>
            <person name="Yokoi T."/>
            <person name="Furuya T."/>
            <person name="Kikkawa E."/>
            <person name="Omura Y."/>
            <person name="Abe K."/>
            <person name="Kamihara K."/>
            <person name="Katsuta N."/>
            <person name="Sato K."/>
            <person name="Tanikawa M."/>
            <person name="Yamazaki M."/>
            <person name="Ninomiya K."/>
            <person name="Ishibashi T."/>
            <person name="Yamashita H."/>
            <person name="Murakawa K."/>
            <person name="Fujimori K."/>
            <person name="Tanai H."/>
            <person name="Kimata M."/>
            <person name="Watanabe M."/>
            <person name="Hiraoka S."/>
            <person name="Chiba Y."/>
            <person name="Ishida S."/>
            <person name="Ono Y."/>
            <person name="Takiguchi S."/>
            <person name="Watanabe S."/>
            <person name="Yosida M."/>
            <person name="Hotuta T."/>
            <person name="Kusano J."/>
            <person name="Kanehori K."/>
            <person name="Takahashi-Fujii A."/>
            <person name="Hara H."/>
            <person name="Tanase T.-O."/>
            <person name="Nomura Y."/>
            <person name="Togiya S."/>
            <person name="Komai F."/>
            <person name="Hara R."/>
            <person name="Takeuchi K."/>
            <person name="Arita M."/>
            <person name="Imose N."/>
            <person name="Musashino K."/>
            <person name="Yuuki H."/>
            <person name="Oshima A."/>
            <person name="Sasaki N."/>
            <person name="Aotsuka S."/>
            <person name="Yoshikawa Y."/>
            <person name="Matsunawa H."/>
            <person name="Ichihara T."/>
            <person name="Shiohata N."/>
            <person name="Sano S."/>
            <person name="Moriya S."/>
            <person name="Momiyama H."/>
            <person name="Satoh N."/>
            <person name="Takami S."/>
            <person name="Terashima Y."/>
            <person name="Suzuki O."/>
            <person name="Nakagawa S."/>
            <person name="Senoh A."/>
            <person name="Mizoguchi H."/>
            <person name="Goto Y."/>
            <person name="Shimizu F."/>
            <person name="Wakebe H."/>
            <person name="Hishigaki H."/>
            <person name="Watanabe T."/>
            <person name="Sugiyama A."/>
            <person name="Takemoto M."/>
            <person name="Kawakami B."/>
            <person name="Yamazaki M."/>
            <person name="Watanabe K."/>
            <person name="Kumagai A."/>
            <person name="Itakura S."/>
            <person name="Fukuzumi Y."/>
            <person name="Fujimori Y."/>
            <person name="Komiyama M."/>
            <person name="Tashiro H."/>
            <person name="Tanigami A."/>
            <person name="Fujiwara T."/>
            <person name="Ono T."/>
            <person name="Yamada K."/>
            <person name="Fujii Y."/>
            <person name="Ozaki K."/>
            <person name="Hirao M."/>
            <person name="Ohmori Y."/>
            <person name="Kawabata A."/>
            <person name="Hikiji T."/>
            <person name="Kobatake N."/>
            <person name="Inagaki H."/>
            <person name="Ikema Y."/>
            <person name="Okamoto S."/>
            <person name="Okitani R."/>
            <person name="Kawakami T."/>
            <person name="Noguchi S."/>
            <person name="Itoh T."/>
            <person name="Shigeta K."/>
            <person name="Senba T."/>
            <person name="Matsumura K."/>
            <person name="Nakajima Y."/>
            <person name="Mizuno T."/>
            <person name="Morinaga M."/>
            <person name="Sasaki M."/>
            <person name="Togashi T."/>
            <person name="Oyama M."/>
            <person name="Hata H."/>
            <person name="Watanabe M."/>
            <person name="Komatsu T."/>
            <person name="Mizushima-Sugano J."/>
            <person name="Satoh T."/>
            <person name="Shirai Y."/>
            <person name="Takahashi Y."/>
            <person name="Nakagawa K."/>
            <person name="Okumura K."/>
            <person name="Nagase T."/>
            <person name="Nomura N."/>
            <person name="Kikuchi H."/>
            <person name="Masuho Y."/>
            <person name="Yamashita R."/>
            <person name="Nakai K."/>
            <person name="Yada T."/>
            <person name="Nakamura Y."/>
            <person name="Ohara O."/>
            <person name="Isogai T."/>
            <person name="Sugano S."/>
        </authorList>
    </citation>
    <scope>NUCLEOTIDE SEQUENCE [LARGE SCALE MRNA] (ISOFORM 2)</scope>
    <source>
        <tissue>Tongue</tissue>
    </source>
</reference>
<reference key="6">
    <citation type="journal article" date="2008" name="Nat. Methods">
        <title>Human protein factory for converting the transcriptome into an in vitro-expressed proteome.</title>
        <authorList>
            <person name="Goshima N."/>
            <person name="Kawamura Y."/>
            <person name="Fukumoto A."/>
            <person name="Miura A."/>
            <person name="Honma R."/>
            <person name="Satoh R."/>
            <person name="Wakamatsu A."/>
            <person name="Yamamoto J."/>
            <person name="Kimura K."/>
            <person name="Nishikawa T."/>
            <person name="Andoh T."/>
            <person name="Iida Y."/>
            <person name="Ishikawa K."/>
            <person name="Ito E."/>
            <person name="Kagawa N."/>
            <person name="Kaminaga C."/>
            <person name="Kanehori K."/>
            <person name="Kawakami B."/>
            <person name="Kenmochi K."/>
            <person name="Kimura R."/>
            <person name="Kobayashi M."/>
            <person name="Kuroita T."/>
            <person name="Kuwayama H."/>
            <person name="Maruyama Y."/>
            <person name="Matsuo K."/>
            <person name="Minami K."/>
            <person name="Mitsubori M."/>
            <person name="Mori M."/>
            <person name="Morishita R."/>
            <person name="Murase A."/>
            <person name="Nishikawa A."/>
            <person name="Nishikawa S."/>
            <person name="Okamoto T."/>
            <person name="Sakagami N."/>
            <person name="Sakamoto Y."/>
            <person name="Sasaki Y."/>
            <person name="Seki T."/>
            <person name="Sono S."/>
            <person name="Sugiyama A."/>
            <person name="Sumiya T."/>
            <person name="Takayama T."/>
            <person name="Takayama Y."/>
            <person name="Takeda H."/>
            <person name="Togashi T."/>
            <person name="Yahata K."/>
            <person name="Yamada H."/>
            <person name="Yanagisawa Y."/>
            <person name="Endo Y."/>
            <person name="Imamoto F."/>
            <person name="Kisu Y."/>
            <person name="Tanaka S."/>
            <person name="Isogai T."/>
            <person name="Imai J."/>
            <person name="Watanabe S."/>
            <person name="Nomura N."/>
        </authorList>
    </citation>
    <scope>NUCLEOTIDE SEQUENCE [LARGE SCALE MRNA] (ISOFORM 2)</scope>
</reference>
<reference key="7">
    <citation type="journal article" date="2004" name="Nature">
        <title>DNA sequence and analysis of human chromosome 9.</title>
        <authorList>
            <person name="Humphray S.J."/>
            <person name="Oliver K."/>
            <person name="Hunt A.R."/>
            <person name="Plumb R.W."/>
            <person name="Loveland J.E."/>
            <person name="Howe K.L."/>
            <person name="Andrews T.D."/>
            <person name="Searle S."/>
            <person name="Hunt S.E."/>
            <person name="Scott C.E."/>
            <person name="Jones M.C."/>
            <person name="Ainscough R."/>
            <person name="Almeida J.P."/>
            <person name="Ambrose K.D."/>
            <person name="Ashwell R.I.S."/>
            <person name="Babbage A.K."/>
            <person name="Babbage S."/>
            <person name="Bagguley C.L."/>
            <person name="Bailey J."/>
            <person name="Banerjee R."/>
            <person name="Barker D.J."/>
            <person name="Barlow K.F."/>
            <person name="Bates K."/>
            <person name="Beasley H."/>
            <person name="Beasley O."/>
            <person name="Bird C.P."/>
            <person name="Bray-Allen S."/>
            <person name="Brown A.J."/>
            <person name="Brown J.Y."/>
            <person name="Burford D."/>
            <person name="Burrill W."/>
            <person name="Burton J."/>
            <person name="Carder C."/>
            <person name="Carter N.P."/>
            <person name="Chapman J.C."/>
            <person name="Chen Y."/>
            <person name="Clarke G."/>
            <person name="Clark S.Y."/>
            <person name="Clee C.M."/>
            <person name="Clegg S."/>
            <person name="Collier R.E."/>
            <person name="Corby N."/>
            <person name="Crosier M."/>
            <person name="Cummings A.T."/>
            <person name="Davies J."/>
            <person name="Dhami P."/>
            <person name="Dunn M."/>
            <person name="Dutta I."/>
            <person name="Dyer L.W."/>
            <person name="Earthrowl M.E."/>
            <person name="Faulkner L."/>
            <person name="Fleming C.J."/>
            <person name="Frankish A."/>
            <person name="Frankland J.A."/>
            <person name="French L."/>
            <person name="Fricker D.G."/>
            <person name="Garner P."/>
            <person name="Garnett J."/>
            <person name="Ghori J."/>
            <person name="Gilbert J.G.R."/>
            <person name="Glison C."/>
            <person name="Grafham D.V."/>
            <person name="Gribble S."/>
            <person name="Griffiths C."/>
            <person name="Griffiths-Jones S."/>
            <person name="Grocock R."/>
            <person name="Guy J."/>
            <person name="Hall R.E."/>
            <person name="Hammond S."/>
            <person name="Harley J.L."/>
            <person name="Harrison E.S.I."/>
            <person name="Hart E.A."/>
            <person name="Heath P.D."/>
            <person name="Henderson C.D."/>
            <person name="Hopkins B.L."/>
            <person name="Howard P.J."/>
            <person name="Howden P.J."/>
            <person name="Huckle E."/>
            <person name="Johnson C."/>
            <person name="Johnson D."/>
            <person name="Joy A.A."/>
            <person name="Kay M."/>
            <person name="Keenan S."/>
            <person name="Kershaw J.K."/>
            <person name="Kimberley A.M."/>
            <person name="King A."/>
            <person name="Knights A."/>
            <person name="Laird G.K."/>
            <person name="Langford C."/>
            <person name="Lawlor S."/>
            <person name="Leongamornlert D.A."/>
            <person name="Leversha M."/>
            <person name="Lloyd C."/>
            <person name="Lloyd D.M."/>
            <person name="Lovell J."/>
            <person name="Martin S."/>
            <person name="Mashreghi-Mohammadi M."/>
            <person name="Matthews L."/>
            <person name="McLaren S."/>
            <person name="McLay K.E."/>
            <person name="McMurray A."/>
            <person name="Milne S."/>
            <person name="Nickerson T."/>
            <person name="Nisbett J."/>
            <person name="Nordsiek G."/>
            <person name="Pearce A.V."/>
            <person name="Peck A.I."/>
            <person name="Porter K.M."/>
            <person name="Pandian R."/>
            <person name="Pelan S."/>
            <person name="Phillimore B."/>
            <person name="Povey S."/>
            <person name="Ramsey Y."/>
            <person name="Rand V."/>
            <person name="Scharfe M."/>
            <person name="Sehra H.K."/>
            <person name="Shownkeen R."/>
            <person name="Sims S.K."/>
            <person name="Skuce C.D."/>
            <person name="Smith M."/>
            <person name="Steward C.A."/>
            <person name="Swarbreck D."/>
            <person name="Sycamore N."/>
            <person name="Tester J."/>
            <person name="Thorpe A."/>
            <person name="Tracey A."/>
            <person name="Tromans A."/>
            <person name="Thomas D.W."/>
            <person name="Wall M."/>
            <person name="Wallis J.M."/>
            <person name="West A.P."/>
            <person name="Whitehead S.L."/>
            <person name="Willey D.L."/>
            <person name="Williams S.A."/>
            <person name="Wilming L."/>
            <person name="Wray P.W."/>
            <person name="Young L."/>
            <person name="Ashurst J.L."/>
            <person name="Coulson A."/>
            <person name="Blocker H."/>
            <person name="Durbin R.M."/>
            <person name="Sulston J.E."/>
            <person name="Hubbard T."/>
            <person name="Jackson M.J."/>
            <person name="Bentley D.R."/>
            <person name="Beck S."/>
            <person name="Rogers J."/>
            <person name="Dunham I."/>
        </authorList>
    </citation>
    <scope>NUCLEOTIDE SEQUENCE [LARGE SCALE GENOMIC DNA]</scope>
</reference>
<reference key="8">
    <citation type="submission" date="2005-07" db="EMBL/GenBank/DDBJ databases">
        <authorList>
            <person name="Mural R.J."/>
            <person name="Istrail S."/>
            <person name="Sutton G.G."/>
            <person name="Florea L."/>
            <person name="Halpern A.L."/>
            <person name="Mobarry C.M."/>
            <person name="Lippert R."/>
            <person name="Walenz B."/>
            <person name="Shatkay H."/>
            <person name="Dew I."/>
            <person name="Miller J.R."/>
            <person name="Flanigan M.J."/>
            <person name="Edwards N.J."/>
            <person name="Bolanos R."/>
            <person name="Fasulo D."/>
            <person name="Halldorsson B.V."/>
            <person name="Hannenhalli S."/>
            <person name="Turner R."/>
            <person name="Yooseph S."/>
            <person name="Lu F."/>
            <person name="Nusskern D.R."/>
            <person name="Shue B.C."/>
            <person name="Zheng X.H."/>
            <person name="Zhong F."/>
            <person name="Delcher A.L."/>
            <person name="Huson D.H."/>
            <person name="Kravitz S.A."/>
            <person name="Mouchard L."/>
            <person name="Reinert K."/>
            <person name="Remington K.A."/>
            <person name="Clark A.G."/>
            <person name="Waterman M.S."/>
            <person name="Eichler E.E."/>
            <person name="Adams M.D."/>
            <person name="Hunkapiller M.W."/>
            <person name="Myers E.W."/>
            <person name="Venter J.C."/>
        </authorList>
    </citation>
    <scope>NUCLEOTIDE SEQUENCE [LARGE SCALE GENOMIC DNA]</scope>
</reference>
<reference key="9">
    <citation type="journal article" date="2004" name="Genome Res.">
        <title>The status, quality, and expansion of the NIH full-length cDNA project: the Mammalian Gene Collection (MGC).</title>
        <authorList>
            <consortium name="The MGC Project Team"/>
        </authorList>
    </citation>
    <scope>NUCLEOTIDE SEQUENCE [LARGE SCALE MRNA] (ISOFORMS 1 AND 2)</scope>
    <source>
        <tissue>Muscle</tissue>
    </source>
</reference>
<reference key="10">
    <citation type="submission" date="2008-03" db="UniProtKB">
        <authorList>
            <person name="Bienvenut W.V."/>
            <person name="Vousden K.H."/>
            <person name="Lukashchuk N."/>
        </authorList>
    </citation>
    <scope>PROTEIN SEQUENCE OF 1-52; 70-103; 149-163; 192-201; 208-219; 317-325; 378-405 AND 423-456</scope>
    <scope>ACETYLATION AT MET-1</scope>
    <scope>IDENTIFICATION BY MASS SPECTROMETRY</scope>
    <source>
        <tissue>Lung carcinoma</tissue>
    </source>
</reference>
<reference key="11">
    <citation type="submission" date="2008-12" db="UniProtKB">
        <authorList>
            <person name="Lubec G."/>
            <person name="Afjehi-Sadat L."/>
            <person name="Chen W.-Q."/>
            <person name="Sun Y."/>
        </authorList>
    </citation>
    <scope>PROTEIN SEQUENCE OF 38-46; 149-163; 208-219; 306-316 AND 378-396</scope>
    <scope>IDENTIFICATION BY MASS SPECTROMETRY</scope>
    <source>
        <tissue>Brain</tissue>
        <tissue>Cajal-Retzius cell</tissue>
        <tissue>Fetal brain cortex</tissue>
    </source>
</reference>
<reference key="12">
    <citation type="journal article" date="1998" name="J. Biol. Chem.">
        <title>Hepatitis C virus core protein interacts with heterogeneous nuclear ribonucleoprotein K.</title>
        <authorList>
            <person name="Hsieh T.-Y."/>
            <person name="Matsumoto M."/>
            <person name="Chou H.-C."/>
            <person name="Schneider R."/>
            <person name="Hwang S.B."/>
            <person name="Lee A.S."/>
            <person name="Lai M.M.C."/>
        </authorList>
    </citation>
    <scope>INTERACTION WITH HCV CORE PROTEIN (MICROBIAL INFECTION)</scope>
</reference>
<reference key="13">
    <citation type="journal article" date="2002" name="J. Biol. Chem.">
        <title>An RNA helicase, DDX1, interacting with poly(A) RNA and heterogeneous nuclear ribonucleoprotein K.</title>
        <authorList>
            <person name="Chen H.C."/>
            <person name="Lin W.C."/>
            <person name="Tsay Y.G."/>
            <person name="Lee S.C."/>
            <person name="Chang C.J."/>
        </authorList>
    </citation>
    <scope>INTERACTION WITH DDX1</scope>
</reference>
<reference key="14">
    <citation type="journal article" date="2002" name="Proteomics">
        <title>Cluster analysis of an extensive human breast cancer cell line protein expression map database.</title>
        <authorList>
            <person name="Harris R.A."/>
            <person name="Yang A."/>
            <person name="Stein R.C."/>
            <person name="Lucy K."/>
            <person name="Brusten L."/>
            <person name="Herath A."/>
            <person name="Parekh R."/>
            <person name="Waterfield M.D."/>
            <person name="O'Hare M.J."/>
            <person name="Neville M.A."/>
            <person name="Page M.J."/>
            <person name="Zvelebil M.J."/>
        </authorList>
    </citation>
    <scope>MASS SPECTROMETRY</scope>
    <source>
        <tissue>Mammary cancer</tissue>
    </source>
</reference>
<reference key="15">
    <citation type="journal article" date="2002" name="RNA">
        <title>Purification and characterization of native spliceosomes suitable for three-dimensional structural analysis.</title>
        <authorList>
            <person name="Jurica M.S."/>
            <person name="Licklider L.J."/>
            <person name="Gygi S.P."/>
            <person name="Grigorieff N."/>
            <person name="Moore M.J."/>
        </authorList>
    </citation>
    <scope>IDENTIFICATION BY MASS SPECTROMETRY</scope>
    <scope>IDENTIFICATION IN THE SPLICEOSOMAL C COMPLEX</scope>
</reference>
<reference key="16">
    <citation type="journal article" date="2003" name="Nature">
        <title>Proteomic characterization of the human centrosome by protein correlation profiling.</title>
        <authorList>
            <person name="Andersen J.S."/>
            <person name="Wilkinson C.J."/>
            <person name="Mayor T."/>
            <person name="Mortensen P."/>
            <person name="Nigg E.A."/>
            <person name="Mann M."/>
        </authorList>
    </citation>
    <scope>IDENTIFICATION BY MASS SPECTROMETRY</scope>
    <source>
        <tissue>Lymphoblast</tissue>
    </source>
</reference>
<reference key="17">
    <citation type="journal article" date="2005" name="Cell">
        <title>hnRNP K: an HDM2 target and transcriptional coactivator of p53 in response to DNA damage.</title>
        <authorList>
            <person name="Moumen A."/>
            <person name="Masterson P."/>
            <person name="O'Connor M.J."/>
            <person name="Jackson S.P."/>
        </authorList>
    </citation>
    <scope>FUNCTION</scope>
    <scope>INTERACTION WITH MDM2 AND TP53</scope>
    <scope>SUBCELLULAR LOCATION</scope>
    <scope>UBIQUITINATION</scope>
    <scope>INDUCTION</scope>
</reference>
<reference key="18">
    <citation type="journal article" date="2006" name="Cell">
        <title>Global, in vivo, and site-specific phosphorylation dynamics in signaling networks.</title>
        <authorList>
            <person name="Olsen J.V."/>
            <person name="Blagoev B."/>
            <person name="Gnad F."/>
            <person name="Macek B."/>
            <person name="Kumar C."/>
            <person name="Mortensen P."/>
            <person name="Mann M."/>
        </authorList>
    </citation>
    <scope>PHOSPHORYLATION [LARGE SCALE ANALYSIS] AT SER-284</scope>
    <scope>IDENTIFICATION BY MASS SPECTROMETRY [LARGE SCALE ANALYSIS]</scope>
    <source>
        <tissue>Cervix carcinoma</tissue>
    </source>
</reference>
<reference key="19">
    <citation type="journal article" date="2006" name="Cell. Signal.">
        <title>PITK, a PP1 targeting subunit that modulates the phosphorylation of the transcriptional regulator hnRNP K.</title>
        <authorList>
            <person name="Kwiek N.C."/>
            <person name="Thacker D.F."/>
            <person name="Datto M.B."/>
            <person name="Megosh H.B."/>
            <person name="Haystead T.A.J."/>
        </authorList>
    </citation>
    <scope>INTERACTION WITH ANKRD28</scope>
    <scope>PHOSPHORYLATION AT SER-284</scope>
</reference>
<reference key="20">
    <citation type="journal article" date="2006" name="Nat. Biotechnol.">
        <title>A probability-based approach for high-throughput protein phosphorylation analysis and site localization.</title>
        <authorList>
            <person name="Beausoleil S.A."/>
            <person name="Villen J."/>
            <person name="Gerber S.A."/>
            <person name="Rush J."/>
            <person name="Gygi S.P."/>
        </authorList>
    </citation>
    <scope>PHOSPHORYLATION [LARGE SCALE ANALYSIS] AT SER-216 AND SER-379</scope>
    <scope>IDENTIFICATION BY MASS SPECTROMETRY [LARGE SCALE ANALYSIS]</scope>
    <source>
        <tissue>Cervix carcinoma</tissue>
    </source>
</reference>
<reference key="21">
    <citation type="journal article" date="2007" name="J. Proteome Res.">
        <title>Improved titanium dioxide enrichment of phosphopeptides from HeLa cells and high confident phosphopeptide identification by cross-validation of MS/MS and MS/MS/MS spectra.</title>
        <authorList>
            <person name="Yu L.R."/>
            <person name="Zhu Z."/>
            <person name="Chan K.C."/>
            <person name="Issaq H.J."/>
            <person name="Dimitrov D.S."/>
            <person name="Veenstra T.D."/>
        </authorList>
    </citation>
    <scope>IDENTIFICATION BY MASS SPECTROMETRY [LARGE SCALE ANALYSIS]</scope>
    <source>
        <tissue>Cervix carcinoma</tissue>
    </source>
</reference>
<reference key="22">
    <citation type="journal article" date="2008" name="FEBS Lett.">
        <title>African swine fever virus protein p30 interaction with heterogeneous nuclear ribonucleoprotein K (hnRNP-K) during infection.</title>
        <authorList>
            <person name="Hernaez B."/>
            <person name="Escribano J.M."/>
            <person name="Alonso C."/>
        </authorList>
    </citation>
    <scope>INTERACTION WITH ASFV PROTEIN P30</scope>
    <scope>SUBCELLULAR LOCATION</scope>
</reference>
<reference key="23">
    <citation type="journal article" date="2008" name="Mol. Cell">
        <title>Kinase-selective enrichment enables quantitative phosphoproteomics of the kinome across the cell cycle.</title>
        <authorList>
            <person name="Daub H."/>
            <person name="Olsen J.V."/>
            <person name="Bairlein M."/>
            <person name="Gnad F."/>
            <person name="Oppermann F.S."/>
            <person name="Korner R."/>
            <person name="Greff Z."/>
            <person name="Keri G."/>
            <person name="Stemmann O."/>
            <person name="Mann M."/>
        </authorList>
    </citation>
    <scope>IDENTIFICATION BY MASS SPECTROMETRY [LARGE SCALE ANALYSIS]</scope>
    <source>
        <tissue>Cervix carcinoma</tissue>
    </source>
</reference>
<reference key="24">
    <citation type="journal article" date="2008" name="Proc. Natl. Acad. Sci. U.S.A.">
        <title>A quantitative atlas of mitotic phosphorylation.</title>
        <authorList>
            <person name="Dephoure N."/>
            <person name="Zhou C."/>
            <person name="Villen J."/>
            <person name="Beausoleil S.A."/>
            <person name="Bakalarski C.E."/>
            <person name="Elledge S.J."/>
            <person name="Gygi S.P."/>
        </authorList>
    </citation>
    <scope>PHOSPHORYLATION [LARGE SCALE ANALYSIS] AT SER-116; SER-216 AND SER-284</scope>
    <scope>IDENTIFICATION BY MASS SPECTROMETRY [LARGE SCALE ANALYSIS]</scope>
    <source>
        <tissue>Cervix carcinoma</tissue>
    </source>
</reference>
<reference key="25">
    <citation type="journal article" date="2009" name="Anal. Chem.">
        <title>Lys-N and trypsin cover complementary parts of the phosphoproteome in a refined SCX-based approach.</title>
        <authorList>
            <person name="Gauci S."/>
            <person name="Helbig A.O."/>
            <person name="Slijper M."/>
            <person name="Krijgsveld J."/>
            <person name="Heck A.J."/>
            <person name="Mohammed S."/>
        </authorList>
    </citation>
    <scope>ACETYLATION [LARGE SCALE ANALYSIS] AT MET-1</scope>
    <scope>IDENTIFICATION BY MASS SPECTROMETRY [LARGE SCALE ANALYSIS]</scope>
</reference>
<reference key="26">
    <citation type="journal article" date="2009" name="Sci. Signal.">
        <title>Quantitative phosphoproteomic analysis of T cell receptor signaling reveals system-wide modulation of protein-protein interactions.</title>
        <authorList>
            <person name="Mayya V."/>
            <person name="Lundgren D.H."/>
            <person name="Hwang S.-I."/>
            <person name="Rezaul K."/>
            <person name="Wu L."/>
            <person name="Eng J.K."/>
            <person name="Rodionov V."/>
            <person name="Han D.K."/>
        </authorList>
    </citation>
    <scope>PHOSPHORYLATION [LARGE SCALE ANALYSIS] AT SER-216 AND TYR-380</scope>
    <scope>IDENTIFICATION BY MASS SPECTROMETRY [LARGE SCALE ANALYSIS]</scope>
    <source>
        <tissue>Leukemic T-cell</tissue>
    </source>
</reference>
<reference key="27">
    <citation type="journal article" date="2010" name="Cell">
        <title>A large intergenic noncoding RNA induced by p53 mediates global gene repression in the p53 response.</title>
        <authorList>
            <person name="Huarte M."/>
            <person name="Guttman M."/>
            <person name="Feldser D."/>
            <person name="Garber M."/>
            <person name="Koziol M.J."/>
            <person name="Kenzelmann-Broz D."/>
            <person name="Khalil A.M."/>
            <person name="Zuk O."/>
            <person name="Amit I."/>
            <person name="Rabani M."/>
            <person name="Attardi L.D."/>
            <person name="Regev A."/>
            <person name="Lander E.S."/>
            <person name="Jacks T."/>
            <person name="Rinn J.L."/>
        </authorList>
    </citation>
    <scope>FUNCTION</scope>
</reference>
<reference key="28">
    <citation type="journal article" date="2010" name="Sci. Signal.">
        <title>Quantitative phosphoproteomics reveals widespread full phosphorylation site occupancy during mitosis.</title>
        <authorList>
            <person name="Olsen J.V."/>
            <person name="Vermeulen M."/>
            <person name="Santamaria A."/>
            <person name="Kumar C."/>
            <person name="Miller M.L."/>
            <person name="Jensen L.J."/>
            <person name="Gnad F."/>
            <person name="Cox J."/>
            <person name="Jensen T.S."/>
            <person name="Nigg E.A."/>
            <person name="Brunak S."/>
            <person name="Mann M."/>
        </authorList>
    </citation>
    <scope>PHOSPHORYLATION [LARGE SCALE ANALYSIS] AT SER-216; SER-284 AND SER-379</scope>
    <scope>IDENTIFICATION BY MASS SPECTROMETRY [LARGE SCALE ANALYSIS]</scope>
    <source>
        <tissue>Cervix carcinoma</tissue>
    </source>
</reference>
<reference key="29">
    <citation type="journal article" date="2011" name="BMC Syst. Biol.">
        <title>Initial characterization of the human central proteome.</title>
        <authorList>
            <person name="Burkard T.R."/>
            <person name="Planyavsky M."/>
            <person name="Kaupe I."/>
            <person name="Breitwieser F.P."/>
            <person name="Buerckstuemmer T."/>
            <person name="Bennett K.L."/>
            <person name="Superti-Furga G."/>
            <person name="Colinge J."/>
        </authorList>
    </citation>
    <scope>IDENTIFICATION BY MASS SPECTROMETRY [LARGE SCALE ANALYSIS]</scope>
</reference>
<reference key="30">
    <citation type="journal article" date="2011" name="Sci. Signal.">
        <title>System-wide temporal characterization of the proteome and phosphoproteome of human embryonic stem cell differentiation.</title>
        <authorList>
            <person name="Rigbolt K.T."/>
            <person name="Prokhorova T.A."/>
            <person name="Akimov V."/>
            <person name="Henningsen J."/>
            <person name="Johansen P.T."/>
            <person name="Kratchmarova I."/>
            <person name="Kassem M."/>
            <person name="Mann M."/>
            <person name="Olsen J.V."/>
            <person name="Blagoev B."/>
        </authorList>
    </citation>
    <scope>PHOSPHORYLATION [LARGE SCALE ANALYSIS] AT SER-214; SER-216; SER-284 AND SER-379</scope>
    <scope>IDENTIFICATION BY MASS SPECTROMETRY [LARGE SCALE ANALYSIS]</scope>
</reference>
<reference key="31">
    <citation type="journal article" date="2012" name="Biochim. Biophys. Acta">
        <title>Characterization of O-GlcNAc cycling and proteomic identification of differentially O-GlcNAcylated proteins during G1/S transition.</title>
        <authorList>
            <person name="Drougat L."/>
            <person name="Olivier-Van Stichelen S."/>
            <person name="Mortuaire M."/>
            <person name="Foulquier F."/>
            <person name="Lacoste A.S."/>
            <person name="Michalski J.C."/>
            <person name="Lefebvre T."/>
            <person name="Vercoutter-Edouart A.S."/>
        </authorList>
    </citation>
    <scope>GLYCOSYLATION</scope>
</reference>
<reference key="32">
    <citation type="journal article" date="2012" name="Eur. J. Cell Biol.">
        <title>Proteomic analysis of podosome fractions from macrophages reveals similarities to spreading initiation centres.</title>
        <authorList>
            <person name="Cervero P."/>
            <person name="Himmel M."/>
            <person name="Kruger M."/>
            <person name="Linder S."/>
        </authorList>
    </citation>
    <scope>SUBCELLULAR LOCATION</scope>
</reference>
<reference key="33">
    <citation type="journal article" date="2012" name="J. Biol. Chem.">
        <title>DNA damage-induced heterogeneous nuclear ribonucleoprotein K SUMOylation regulates p53 transcriptional activation.</title>
        <authorList>
            <person name="Pelisch F."/>
            <person name="Pozzi B."/>
            <person name="Risso G."/>
            <person name="Munoz M.J."/>
            <person name="Srebrow A."/>
        </authorList>
    </citation>
    <scope>FUNCTION</scope>
    <scope>SUMOYLATION AT LYS-422</scope>
    <scope>UBIQUITINATION</scope>
    <scope>MUTAGENESIS OF LYS-422 AND ASP-424</scope>
</reference>
<reference key="34">
    <citation type="journal article" date="2012" name="Proc. Natl. Acad. Sci. U.S.A.">
        <title>N-terminal acetylome analyses and functional insights of the N-terminal acetyltransferase NatB.</title>
        <authorList>
            <person name="Van Damme P."/>
            <person name="Lasa M."/>
            <person name="Polevoda B."/>
            <person name="Gazquez C."/>
            <person name="Elosegui-Artola A."/>
            <person name="Kim D.S."/>
            <person name="De Juan-Pardo E."/>
            <person name="Demeyer K."/>
            <person name="Hole K."/>
            <person name="Larrea E."/>
            <person name="Timmerman E."/>
            <person name="Prieto J."/>
            <person name="Arnesen T."/>
            <person name="Sherman F."/>
            <person name="Gevaert K."/>
            <person name="Aldabe R."/>
        </authorList>
    </citation>
    <scope>ACETYLATION [LARGE SCALE ANALYSIS] AT MET-1</scope>
    <scope>IDENTIFICATION BY MASS SPECTROMETRY [LARGE SCALE ANALYSIS]</scope>
</reference>
<reference key="35">
    <citation type="journal article" date="2013" name="J. Proteome Res.">
        <title>Toward a comprehensive characterization of a human cancer cell phosphoproteome.</title>
        <authorList>
            <person name="Zhou H."/>
            <person name="Di Palma S."/>
            <person name="Preisinger C."/>
            <person name="Peng M."/>
            <person name="Polat A.N."/>
            <person name="Heck A.J."/>
            <person name="Mohammed S."/>
        </authorList>
    </citation>
    <scope>PHOSPHORYLATION [LARGE SCALE ANALYSIS] AT SER-36; SER-75; SER-216; SER-284; SER-379 AND SER-420</scope>
    <scope>IDENTIFICATION BY MASS SPECTROMETRY [LARGE SCALE ANALYSIS]</scope>
    <source>
        <tissue>Cervix carcinoma</tissue>
        <tissue>Erythroleukemia</tissue>
    </source>
</reference>
<reference key="36">
    <citation type="journal article" date="2013" name="PLoS Pathog.">
        <title>Cellular RNA binding proteins NS1-BP and hnRNP K regulate influenza A virus RNA splicing.</title>
        <authorList>
            <person name="Tsai P.L."/>
            <person name="Chiou N.T."/>
            <person name="Kuss S."/>
            <person name="Garcia-Sastre A."/>
            <person name="Lynch K.W."/>
            <person name="Fontoura B.M."/>
        </authorList>
    </citation>
    <scope>INTERACTION WITH IVNS1ABP</scope>
</reference>
<reference key="37">
    <citation type="journal article" date="2014" name="J. Proteomics">
        <title>An enzyme assisted RP-RPLC approach for in-depth analysis of human liver phosphoproteome.</title>
        <authorList>
            <person name="Bian Y."/>
            <person name="Song C."/>
            <person name="Cheng K."/>
            <person name="Dong M."/>
            <person name="Wang F."/>
            <person name="Huang J."/>
            <person name="Sun D."/>
            <person name="Wang L."/>
            <person name="Ye M."/>
            <person name="Zou H."/>
        </authorList>
    </citation>
    <scope>PHOSPHORYLATION [LARGE SCALE ANALYSIS] AT SER-75; SER-116 AND SER-284</scope>
    <scope>IDENTIFICATION BY MASS SPECTROMETRY [LARGE SCALE ANALYSIS]</scope>
    <source>
        <tissue>Liver</tissue>
    </source>
</reference>
<reference key="38">
    <citation type="journal article" date="2014" name="Mol. Cell. Proteomics">
        <title>Immunoaffinity enrichment and mass spectrometry analysis of protein methylation.</title>
        <authorList>
            <person name="Guo A."/>
            <person name="Gu H."/>
            <person name="Zhou J."/>
            <person name="Mulhern D."/>
            <person name="Wang Y."/>
            <person name="Lee K.A."/>
            <person name="Yang V."/>
            <person name="Aguiar M."/>
            <person name="Kornhauser J."/>
            <person name="Jia X."/>
            <person name="Ren J."/>
            <person name="Beausoleil S.A."/>
            <person name="Silva J.C."/>
            <person name="Vemulapalli V."/>
            <person name="Bedford M.T."/>
            <person name="Comb M.J."/>
        </authorList>
    </citation>
    <scope>METHYLATION [LARGE SCALE ANALYSIS] AT ARG-316</scope>
    <scope>IDENTIFICATION BY MASS SPECTROMETRY [LARGE SCALE ANALYSIS]</scope>
    <source>
        <tissue>Colon carcinoma</tissue>
    </source>
</reference>
<reference key="39">
    <citation type="journal article" date="2014" name="Nat. Struct. Mol. Biol.">
        <title>Uncovering global SUMOylation signaling networks in a site-specific manner.</title>
        <authorList>
            <person name="Hendriks I.A."/>
            <person name="D'Souza R.C."/>
            <person name="Yang B."/>
            <person name="Verlaan-de Vries M."/>
            <person name="Mann M."/>
            <person name="Vertegaal A.C."/>
        </authorList>
    </citation>
    <scope>SUMOYLATION [LARGE SCALE ANALYSIS] AT LYS-34; LYS-405 AND LYS-422</scope>
    <scope>IDENTIFICATION BY MASS SPECTROMETRY [LARGE SCALE ANALYSIS]</scope>
</reference>
<reference key="40">
    <citation type="journal article" date="2014" name="Proc. Natl. Acad. Sci. U.S.A.">
        <title>Mapping of SUMO sites and analysis of SUMOylation changes induced by external stimuli.</title>
        <authorList>
            <person name="Impens F."/>
            <person name="Radoshevich L."/>
            <person name="Cossart P."/>
            <person name="Ribet D."/>
        </authorList>
    </citation>
    <scope>SUMOYLATION [LARGE SCALE ANALYSIS] AT LYS-34; LYS-163 AND LYS-422</scope>
    <scope>IDENTIFICATION BY MASS SPECTROMETRY [LARGE SCALE ANALYSIS]</scope>
</reference>
<reference key="41">
    <citation type="journal article" date="2015" name="Brain">
        <title>Peptidylprolyl isomerase A governs TARDBP function and assembly in heterogeneous nuclear ribonucleoprotein complexes.</title>
        <authorList>
            <person name="Lauranzano E."/>
            <person name="Pozzi S."/>
            <person name="Pasetto L."/>
            <person name="Stucchi R."/>
            <person name="Massignan T."/>
            <person name="Paolella K."/>
            <person name="Mombrini M."/>
            <person name="Nardo G."/>
            <person name="Lunetta C."/>
            <person name="Corbo M."/>
            <person name="Mora G."/>
            <person name="Bendotti C."/>
            <person name="Bonetto V."/>
        </authorList>
    </citation>
    <scope>INTERACTION WITH PPIA</scope>
</reference>
<reference key="42">
    <citation type="journal article" date="2015" name="Hum. Mutat.">
        <title>GeneMatcher aids in the identification of a new malformation syndrome with intellectual disability, unique facial dysmorphisms, and skeletal and connective tissue abnormalities caused by de novo variants in HNRNPK.</title>
        <authorList>
            <person name="Au P.Y."/>
            <person name="You J."/>
            <person name="Caluseriu O."/>
            <person name="Schwartzentruber J."/>
            <person name="Majewski J."/>
            <person name="Bernier F.P."/>
            <person name="Ferguson M."/>
            <person name="Valle D."/>
            <person name="Parboosingh J.S."/>
            <person name="Sobreira N."/>
            <person name="Innes A.M."/>
            <person name="Kline A.D."/>
        </authorList>
    </citation>
    <scope>INVOLVEMENT IN AUKS</scope>
</reference>
<reference key="43">
    <citation type="journal article" date="2015" name="Mol. Cell. Proteomics">
        <title>System-wide analysis of SUMOylation dynamics in response to replication stress reveals novel small ubiquitin-like modified target proteins and acceptor lysines relevant for genome stability.</title>
        <authorList>
            <person name="Xiao Z."/>
            <person name="Chang J.G."/>
            <person name="Hendriks I.A."/>
            <person name="Sigurdsson J.O."/>
            <person name="Olsen J.V."/>
            <person name="Vertegaal A.C."/>
        </authorList>
    </citation>
    <scope>SUMOYLATION [LARGE SCALE ANALYSIS] AT LYS-422</scope>
    <scope>IDENTIFICATION BY MASS SPECTROMETRY [LARGE SCALE ANALYSIS]</scope>
</reference>
<reference key="44">
    <citation type="journal article" date="2015" name="Proteomics">
        <title>N-terminome analysis of the human mitochondrial proteome.</title>
        <authorList>
            <person name="Vaca Jacome A.S."/>
            <person name="Rabilloud T."/>
            <person name="Schaeffer-Reiss C."/>
            <person name="Rompais M."/>
            <person name="Ayoub D."/>
            <person name="Lane L."/>
            <person name="Bairoch A."/>
            <person name="Van Dorsselaer A."/>
            <person name="Carapito C."/>
        </authorList>
    </citation>
    <scope>IDENTIFICATION BY MASS SPECTROMETRY [LARGE SCALE ANALYSIS]</scope>
</reference>
<reference key="45">
    <citation type="journal article" date="2017" name="Nat. Struct. Mol. Biol.">
        <title>Site-specific mapping of the human SUMO proteome reveals co-modification with phosphorylation.</title>
        <authorList>
            <person name="Hendriks I.A."/>
            <person name="Lyon D."/>
            <person name="Young C."/>
            <person name="Jensen L.J."/>
            <person name="Vertegaal A.C."/>
            <person name="Nielsen M.L."/>
        </authorList>
    </citation>
    <scope>SUMOYLATION [LARGE SCALE ANALYSIS] AT LYS-34; LYS-52; LYS-60; LYS-163; LYS-219; LYS-405 AND LYS-422</scope>
    <scope>IDENTIFICATION BY MASS SPECTROMETRY [LARGE SCALE ANALYSIS]</scope>
</reference>
<reference key="46">
    <citation type="journal article" date="2020" name="Elife">
        <title>circZNF827 nucleates a transcription inhibitory complex to balance neuronal differentiation.</title>
        <authorList>
            <person name="Hollensen A.K."/>
            <person name="Thomsen H.S."/>
            <person name="Lloret-Llinares M."/>
            <person name="Kamstrup A.B."/>
            <person name="Jensen J.M."/>
            <person name="Luckmann M."/>
            <person name="Birkmose N."/>
            <person name="Palmfeldt J."/>
            <person name="Jensen T.H."/>
            <person name="Hansen T.B."/>
            <person name="Damgaard C.K."/>
        </authorList>
    </citation>
    <scope>FUNCTION</scope>
    <scope>SUBUNIT</scope>
</reference>
<reference key="47">
    <citation type="journal article" date="1999" name="J. Mol. Biol.">
        <title>High precision solution structure of the C-terminal KH domain of heterogeneous nuclear ribonucleoprotein K, a c-myc transcription factor.</title>
        <authorList>
            <person name="Baber J.L."/>
            <person name="Libutti D."/>
            <person name="Levens D."/>
            <person name="Tjandra N."/>
        </authorList>
    </citation>
    <scope>STRUCTURE BY NMR OF 375-463</scope>
</reference>
<reference key="48">
    <citation type="journal article" date="2002" name="EMBO J.">
        <title>Molecular basis of sequence-specific single-stranded DNA recognition by KH domains: solution structure of a complex between hnRNP K KH3 and single-stranded DNA.</title>
        <authorList>
            <person name="Braddock D.T."/>
            <person name="Baber J.L."/>
            <person name="Levens D."/>
            <person name="Clore G.M."/>
        </authorList>
    </citation>
    <scope>STRUCTURE BY NMR OF 379-463 IN COMPLEX WITH SINGLE-STRANDED DNA</scope>
</reference>
<reference key="49">
    <citation type="journal article" date="2018" name="Proc. Natl. Acad. Sci. U.S.A.">
        <title>Structural-functional interactions of NS1-BP protein with the splicing and mRNA export machineries for viral and host gene expression.</title>
        <authorList>
            <person name="Zhang K."/>
            <person name="Shang G."/>
            <person name="Padavannil A."/>
            <person name="Wang J."/>
            <person name="Sakthivel R."/>
            <person name="Chen X."/>
            <person name="Kim M."/>
            <person name="Thompson M.G."/>
            <person name="Garcia-Sastre A."/>
            <person name="Lynch K.W."/>
            <person name="Chen Z.J."/>
            <person name="Chook Y.M."/>
            <person name="Fontoura B.M.A."/>
        </authorList>
    </citation>
    <scope>INTERACTION WITH IVNS1ABP</scope>
</reference>
<comment type="function">
    <text evidence="1 10 14 16 22">One of the major pre-mRNA-binding proteins. Binds tenaciously to poly(C) sequences. Likely to play a role in the nuclear metabolism of hnRNAs, particularly for pre-mRNAs that contain cytidine-rich sequences. Can also bind poly(C) single-stranded DNA. Plays an important role in p53/TP53 response to DNA damage, acting at the level of both transcription activation and repression. When sumoylated, acts as a transcriptional coactivator of p53/TP53, playing a role in p21/CDKN1A and 14-3-3 sigma/SFN induction (By similarity). As far as transcription repression is concerned, acts by interacting with long intergenic RNA p21 (lincRNA-p21), a non-coding RNA induced by p53/TP53. This interaction is necessary for the induction of apoptosis, but not cell cycle arrest. As part of a ribonucleoprotein complex composed at least of ZNF827, HNRNPL and the circular RNA circZNF827 that nucleates the complex on chromatin, may negatively regulate the transcription of genes involved in neuronal differentiation (PubMed:33174841).</text>
</comment>
<comment type="subunit">
    <text evidence="2 3 7 8 9 10 11 13 18 19 21 22">Identified in the spliceosome C complex (PubMed:11991638). Part of a transcription inhibitory ribonucleoprotein complex composed at least of the circular RNA circZNF827, ZNF827 and HNRNPL (PubMed:33174841). Interacts with RBM42 and ZIK1 (By similarity). Interacts with BRDT (By similarity). Interacts with ANKRD28 (PubMed:16564677). Interacts with ASFV p30 protein (PubMed:18775702). Interacts with DDX1 (PubMed:12183465). Interacts with MDM2; this interaction leads to ubiquitination and proteasomal degradation (PubMed:16360036). Interacts with p53/TP53 (PubMed:16360036). Interacts with IVNS1ABP (via BACK domain); the interaction is direct (PubMed:23825951, PubMed:30538201). Interacts with PPIA/CYPA (PubMed:25678563).</text>
</comment>
<comment type="subunit">
    <text evidence="24">(Microbial infection) Interacts with HCV core protein (PubMed:9651361).</text>
</comment>
<comment type="interaction">
    <interactant intactId="EBI-304185">
        <id>P61978</id>
    </interactant>
    <interactant intactId="EBI-743598">
        <id>Q9NYB9</id>
        <label>ABI2</label>
    </interactant>
    <organismsDiffer>false</organismsDiffer>
    <experiments>6</experiments>
</comment>
<comment type="interaction">
    <interactant intactId="EBI-304185">
        <id>P61978</id>
    </interactant>
    <interactant intactId="EBI-491169">
        <id>P07550</id>
        <label>ADRB2</label>
    </interactant>
    <organismsDiffer>false</organismsDiffer>
    <experiments>2</experiments>
</comment>
<comment type="interaction">
    <interactant intactId="EBI-304185">
        <id>P61978</id>
    </interactant>
    <interactant intactId="EBI-746103">
        <id>P55064</id>
        <label>AQP5</label>
    </interactant>
    <organismsDiffer>false</organismsDiffer>
    <experiments>3</experiments>
</comment>
<comment type="interaction">
    <interactant intactId="EBI-304185">
        <id>P61978</id>
    </interactant>
    <interactant intactId="EBI-702390">
        <id>Q9UBB4</id>
        <label>ATXN10</label>
    </interactant>
    <organismsDiffer>false</organismsDiffer>
    <experiments>3</experiments>
</comment>
<comment type="interaction">
    <interactant intactId="EBI-304185">
        <id>P61978</id>
    </interactant>
    <interactant intactId="EBI-448680">
        <id>O14965</id>
        <label>AURKA</label>
    </interactant>
    <organismsDiffer>false</organismsDiffer>
    <experiments>2</experiments>
</comment>
<comment type="interaction">
    <interactant intactId="EBI-304185">
        <id>P61978</id>
    </interactant>
    <interactant intactId="EBI-10244057">
        <id>Q5I0X4</id>
        <label>C6orf226</label>
    </interactant>
    <organismsDiffer>false</organismsDiffer>
    <experiments>7</experiments>
</comment>
<comment type="interaction">
    <interactant intactId="EBI-304185">
        <id>P61978</id>
    </interactant>
    <interactant intactId="EBI-538850">
        <id>Q14011</id>
        <label>CIRBP</label>
    </interactant>
    <organismsDiffer>false</organismsDiffer>
    <experiments>9</experiments>
</comment>
<comment type="interaction">
    <interactant intactId="EBI-304185">
        <id>P61978</id>
    </interactant>
    <interactant intactId="EBI-2871865">
        <id>Q5D0E6</id>
        <label>DALRD3</label>
    </interactant>
    <organismsDiffer>false</organismsDiffer>
    <experiments>3</experiments>
</comment>
<comment type="interaction">
    <interactant intactId="EBI-304185">
        <id>P61978</id>
    </interactant>
    <interactant intactId="EBI-8589586">
        <id>P09172</id>
        <label>DBH</label>
    </interactant>
    <organismsDiffer>false</organismsDiffer>
    <experiments>3</experiments>
</comment>
<comment type="interaction">
    <interactant intactId="EBI-304185">
        <id>P61978</id>
    </interactant>
    <interactant intactId="EBI-448771">
        <id>Q92608</id>
        <label>DOCK2</label>
    </interactant>
    <organismsDiffer>false</organismsDiffer>
    <experiments>6</experiments>
</comment>
<comment type="interaction">
    <interactant intactId="EBI-304185">
        <id>P61978</id>
    </interactant>
    <interactant intactId="EBI-744419">
        <id>Q96D16</id>
        <label>FBXL18</label>
    </interactant>
    <organismsDiffer>false</organismsDiffer>
    <experiments>6</experiments>
</comment>
<comment type="interaction">
    <interactant intactId="EBI-304185">
        <id>P61978</id>
    </interactant>
    <interactant intactId="EBI-744302">
        <id>P14136</id>
        <label>GFAP</label>
    </interactant>
    <organismsDiffer>false</organismsDiffer>
    <experiments>3</experiments>
</comment>
<comment type="interaction">
    <interactant intactId="EBI-304185">
        <id>P61978</id>
    </interactant>
    <interactant intactId="EBI-401755">
        <id>P62993</id>
        <label>GRB2</label>
    </interactant>
    <organismsDiffer>false</organismsDiffer>
    <experiments>10</experiments>
</comment>
<comment type="interaction">
    <interactant intactId="EBI-304185">
        <id>P61978</id>
    </interactant>
    <interactant intactId="EBI-299649">
        <id>P22626</id>
        <label>HNRNPA2B1</label>
    </interactant>
    <organismsDiffer>false</organismsDiffer>
    <experiments>2</experiments>
</comment>
<comment type="interaction">
    <interactant intactId="EBI-304185">
        <id>P61978</id>
    </interactant>
    <interactant intactId="EBI-304185">
        <id>P61978</id>
        <label>HNRNPK</label>
    </interactant>
    <organismsDiffer>false</organismsDiffer>
    <experiments>4</experiments>
</comment>
<comment type="interaction">
    <interactant intactId="EBI-304185">
        <id>P61978</id>
    </interactant>
    <interactant intactId="EBI-719024">
        <id>P14866</id>
        <label>HNRNPL</label>
    </interactant>
    <organismsDiffer>false</organismsDiffer>
    <experiments>5</experiments>
</comment>
<comment type="interaction">
    <interactant intactId="EBI-304185">
        <id>P61978</id>
    </interactant>
    <interactant intactId="EBI-535849">
        <id>Q8WVV9</id>
        <label>HNRNPLL</label>
    </interactant>
    <organismsDiffer>false</organismsDiffer>
    <experiments>9</experiments>
</comment>
<comment type="interaction">
    <interactant intactId="EBI-304185">
        <id>P61978</id>
    </interactant>
    <interactant intactId="EBI-351126">
        <id>Q00839</id>
        <label>HNRNPU</label>
    </interactant>
    <organismsDiffer>false</organismsDiffer>
    <experiments>2</experiments>
</comment>
<comment type="interaction">
    <interactant intactId="EBI-304185">
        <id>P61978</id>
    </interactant>
    <interactant intactId="EBI-466029">
        <id>P42858</id>
        <label>HTT</label>
    </interactant>
    <organismsDiffer>false</organismsDiffer>
    <experiments>12</experiments>
</comment>
<comment type="interaction">
    <interactant intactId="EBI-304185">
        <id>P61978</id>
    </interactant>
    <interactant intactId="EBI-1055254">
        <id>Q8WXH2</id>
        <label>JPH3</label>
    </interactant>
    <organismsDiffer>false</organismsDiffer>
    <experiments>3</experiments>
</comment>
<comment type="interaction">
    <interactant intactId="EBI-304185">
        <id>P61978</id>
    </interactant>
    <interactant intactId="EBI-1364">
        <id>Q07666</id>
        <label>KHDRBS1</label>
    </interactant>
    <organismsDiffer>false</organismsDiffer>
    <experiments>3</experiments>
</comment>
<comment type="interaction">
    <interactant intactId="EBI-304185">
        <id>P61978</id>
    </interactant>
    <interactant intactId="EBI-10250211">
        <id>Q6IPE9</id>
        <label>MARK4</label>
    </interactant>
    <organismsDiffer>false</organismsDiffer>
    <experiments>6</experiments>
</comment>
<comment type="interaction">
    <interactant intactId="EBI-304185">
        <id>P61978</id>
    </interactant>
    <interactant intactId="EBI-352602">
        <id>P43243</id>
        <label>MATR3</label>
    </interactant>
    <organismsDiffer>false</organismsDiffer>
    <experiments>4</experiments>
</comment>
<comment type="interaction">
    <interactant intactId="EBI-304185">
        <id>P61978</id>
    </interactant>
    <interactant intactId="EBI-389668">
        <id>Q00987</id>
        <label>MDM2</label>
    </interactant>
    <organismsDiffer>false</organismsDiffer>
    <experiments>2</experiments>
</comment>
<comment type="interaction">
    <interactant intactId="EBI-304185">
        <id>P61978</id>
    </interactant>
    <interactant intactId="EBI-713665">
        <id>P19404</id>
        <label>NDUFV2</label>
    </interactant>
    <organismsDiffer>false</organismsDiffer>
    <experiments>3</experiments>
</comment>
<comment type="interaction">
    <interactant intactId="EBI-304185">
        <id>P61978</id>
    </interactant>
    <interactant intactId="EBI-1391623">
        <id>P29474</id>
        <label>NOS3</label>
    </interactant>
    <organismsDiffer>false</organismsDiffer>
    <experiments>3</experiments>
</comment>
<comment type="interaction">
    <interactant intactId="EBI-304185">
        <id>P61978</id>
    </interactant>
    <interactant intactId="EBI-10329013">
        <id>Q9Y5E9</id>
        <label>PCDHB14</label>
    </interactant>
    <organismsDiffer>false</organismsDiffer>
    <experiments>6</experiments>
</comment>
<comment type="interaction">
    <interactant intactId="EBI-304185">
        <id>P61978</id>
    </interactant>
    <interactant intactId="EBI-78738">
        <id>Q99873</id>
        <label>PRMT1</label>
    </interactant>
    <organismsDiffer>false</organismsDiffer>
    <experiments>3</experiments>
</comment>
<comment type="interaction">
    <interactant intactId="EBI-304185">
        <id>P61978</id>
    </interactant>
    <interactant intactId="EBI-1567797">
        <id>Q8WWY3</id>
        <label>PRPF31</label>
    </interactant>
    <organismsDiffer>false</organismsDiffer>
    <experiments>6</experiments>
</comment>
<comment type="interaction">
    <interactant intactId="EBI-304185">
        <id>P61978</id>
    </interactant>
    <interactant intactId="EBI-2803328">
        <id>P79522</id>
        <label>PRR3</label>
    </interactant>
    <organismsDiffer>false</organismsDiffer>
    <experiments>9</experiments>
</comment>
<comment type="interaction">
    <interactant intactId="EBI-304185">
        <id>P61978</id>
    </interactant>
    <interactant intactId="EBI-945792">
        <id>Q96PU8</id>
        <label>QKI</label>
    </interactant>
    <organismsDiffer>false</organismsDiffer>
    <experiments>7</experiments>
</comment>
<comment type="interaction">
    <interactant intactId="EBI-304185">
        <id>P61978</id>
    </interactant>
    <interactant intactId="EBI-740818">
        <id>Q9Y272</id>
        <label>RASD1</label>
    </interactant>
    <organismsDiffer>false</organismsDiffer>
    <experiments>6</experiments>
</comment>
<comment type="interaction">
    <interactant intactId="EBI-304185">
        <id>P61978</id>
    </interactant>
    <interactant intactId="EBI-954272">
        <id>Q96PK6</id>
        <label>RBM14</label>
    </interactant>
    <organismsDiffer>false</organismsDiffer>
    <experiments>4</experiments>
</comment>
<comment type="interaction">
    <interactant intactId="EBI-304185">
        <id>P61978</id>
    </interactant>
    <interactant intactId="EBI-2949699">
        <id>P98179</id>
        <label>RBM3</label>
    </interactant>
    <organismsDiffer>false</organismsDiffer>
    <experiments>7</experiments>
</comment>
<comment type="interaction">
    <interactant intactId="EBI-304185">
        <id>P61978</id>
    </interactant>
    <interactant intactId="EBI-746862">
        <id>Q9BTD8</id>
        <label>RBM42</label>
    </interactant>
    <organismsDiffer>false</organismsDiffer>
    <experiments>4</experiments>
</comment>
<comment type="interaction">
    <interactant intactId="EBI-304185">
        <id>P61978</id>
    </interactant>
    <interactant intactId="EBI-743526">
        <id>P38159</id>
        <label>RBMX</label>
    </interactant>
    <organismsDiffer>false</organismsDiffer>
    <experiments>11</experiments>
</comment>
<comment type="interaction">
    <interactant intactId="EBI-304185">
        <id>P61978</id>
    </interactant>
    <interactant intactId="EBI-8638511">
        <id>P0DJD3</id>
        <label>RBMY1A1</label>
    </interactant>
    <organismsDiffer>false</organismsDiffer>
    <experiments>3</experiments>
</comment>
<comment type="interaction">
    <interactant intactId="EBI-304185">
        <id>P61978</id>
    </interactant>
    <interactant intactId="EBI-8642021">
        <id>Q15415</id>
        <label>RBMY1J</label>
    </interactant>
    <organismsDiffer>false</organismsDiffer>
    <experiments>4</experiments>
</comment>
<comment type="interaction">
    <interactant intactId="EBI-304185">
        <id>P61978</id>
    </interactant>
    <interactant intactId="EBI-10217913">
        <id>Q14D33</id>
        <label>RTP5</label>
    </interactant>
    <organismsDiffer>false</organismsDiffer>
    <experiments>3</experiments>
</comment>
<comment type="interaction">
    <interactant intactId="EBI-304185">
        <id>P61978</id>
    </interactant>
    <interactant intactId="EBI-607085">
        <id>P09012</id>
        <label>SNRPA</label>
    </interactant>
    <organismsDiffer>false</organismsDiffer>
    <experiments>5</experiments>
</comment>
<comment type="interaction">
    <interactant intactId="EBI-304185">
        <id>P61978</id>
    </interactant>
    <interactant intactId="EBI-741237">
        <id>O60504</id>
        <label>SORBS3</label>
    </interactant>
    <organismsDiffer>false</organismsDiffer>
    <experiments>4</experiments>
</comment>
<comment type="interaction">
    <interactant intactId="EBI-304185">
        <id>P61978</id>
    </interactant>
    <interactant intactId="EBI-717201">
        <id>Q9UQ90</id>
        <label>SPG7</label>
    </interactant>
    <organismsDiffer>false</organismsDiffer>
    <experiments>6</experiments>
</comment>
<comment type="interaction">
    <interactant intactId="EBI-304185">
        <id>P61978</id>
    </interactant>
    <interactant intactId="EBI-621482">
        <id>P12931</id>
        <label>SRC</label>
    </interactant>
    <organismsDiffer>false</organismsDiffer>
    <experiments>6</experiments>
</comment>
<comment type="interaction">
    <interactant intactId="EBI-304185">
        <id>P61978</id>
    </interactant>
    <interactant intactId="EBI-372899">
        <id>Q13148</id>
        <label>TARDBP</label>
    </interactant>
    <organismsDiffer>false</organismsDiffer>
    <experiments>3</experiments>
</comment>
<comment type="interaction">
    <interactant intactId="EBI-304185">
        <id>P61978</id>
    </interactant>
    <interactant intactId="EBI-750109">
        <id>Q9NYB0</id>
        <label>TERF2IP</label>
    </interactant>
    <organismsDiffer>false</organismsDiffer>
    <experiments>2</experiments>
</comment>
<comment type="interaction">
    <interactant intactId="EBI-304185">
        <id>P61978</id>
    </interactant>
    <interactant intactId="EBI-366083">
        <id>P04637</id>
        <label>TP53</label>
    </interactant>
    <organismsDiffer>false</organismsDiffer>
    <experiments>2</experiments>
</comment>
<comment type="interaction">
    <interactant intactId="EBI-304185">
        <id>P61978</id>
    </interactant>
    <interactant intactId="EBI-2337775">
        <id>Q9H3D4</id>
        <label>TP63</label>
    </interactant>
    <organismsDiffer>false</organismsDiffer>
    <experiments>2</experiments>
</comment>
<comment type="interaction">
    <interactant intactId="EBI-304185">
        <id>P61978</id>
    </interactant>
    <interactant intactId="EBI-1383454">
        <id>P29597</id>
        <label>TYK2</label>
    </interactant>
    <organismsDiffer>false</organismsDiffer>
    <experiments>4</experiments>
</comment>
<comment type="interaction">
    <interactant intactId="EBI-304185">
        <id>P61978</id>
    </interactant>
    <interactant intactId="EBI-632461">
        <id>Q01081</id>
        <label>U2AF1</label>
    </interactant>
    <organismsDiffer>false</organismsDiffer>
    <experiments>4</experiments>
</comment>
<comment type="interaction">
    <interactant intactId="EBI-304185">
        <id>P61978</id>
    </interactant>
    <interactant intactId="EBI-2849854">
        <id>Q96MU7</id>
        <label>YTHDC1</label>
    </interactant>
    <organismsDiffer>false</organismsDiffer>
    <experiments>4</experiments>
</comment>
<comment type="interaction">
    <interactant intactId="EBI-304185">
        <id>P61978</id>
    </interactant>
    <interactant intactId="EBI-6448783">
        <id>G3V1X1</id>
        <label>ZFC3H1</label>
    </interactant>
    <organismsDiffer>false</organismsDiffer>
    <experiments>3</experiments>
</comment>
<comment type="interaction">
    <interactant intactId="EBI-304185">
        <id>P61978</id>
    </interactant>
    <interactant intactId="EBI-8651919">
        <id>Q66K41</id>
        <label>ZNF385C</label>
    </interactant>
    <organismsDiffer>false</organismsDiffer>
    <experiments>7</experiments>
</comment>
<comment type="interaction">
    <interactant intactId="EBI-304185">
        <id>P61978</id>
    </interactant>
    <interactant intactId="EBI-16429014">
        <id>A0A0S2Z5X4</id>
        <label>ZNF688</label>
    </interactant>
    <organismsDiffer>false</organismsDiffer>
    <experiments>3</experiments>
</comment>
<comment type="interaction">
    <interactant intactId="EBI-304185">
        <id>P61978</id>
    </interactant>
    <interactant intactId="EBI-10240849">
        <id>Q3KQV3</id>
        <label>ZNF792</label>
    </interactant>
    <organismsDiffer>false</organismsDiffer>
    <experiments>3</experiments>
</comment>
<comment type="interaction">
    <interactant intactId="EBI-304185">
        <id>P61978</id>
    </interactant>
    <interactant intactId="EBI-10268244">
        <id>Q8N9J2</id>
    </interactant>
    <organismsDiffer>false</organismsDiffer>
    <experiments>6</experiments>
</comment>
<comment type="interaction">
    <interactant intactId="EBI-304185">
        <id>P61978</id>
    </interactant>
    <interactant intactId="EBI-8068745">
        <id>Q8V1E7</id>
        <label>C'204L</label>
    </interactant>
    <organismsDiffer>true</organismsDiffer>
    <experiments>5</experiments>
</comment>
<comment type="interaction">
    <interactant intactId="EBI-304185">
        <id>P61978</id>
    </interactant>
    <interactant intactId="EBI-1185167">
        <id>Q8AZK7</id>
        <label>EBNA-LP</label>
    </interactant>
    <organismsDiffer>true</organismsDiffer>
    <experiments>2</experiments>
</comment>
<comment type="interaction">
    <interactant intactId="EBI-304185">
        <id>P61978</id>
    </interactant>
    <interactant intactId="EBI-8847394">
        <id>PRO_0000037666</id>
        <dbReference type="UniProtKB" id="P29846"/>
    </interactant>
    <organismsDiffer>true</organismsDiffer>
    <experiments>9</experiments>
</comment>
<comment type="interaction">
    <interactant intactId="EBI-431928">
        <id>P61978-1</id>
    </interactant>
    <interactant intactId="EBI-431928">
        <id>P61978-1</id>
        <label>HNRNPK</label>
    </interactant>
    <organismsDiffer>false</organismsDiffer>
    <experiments>3</experiments>
</comment>
<comment type="interaction">
    <interactant intactId="EBI-7060731">
        <id>P61978-2</id>
    </interactant>
    <interactant intactId="EBI-11743294">
        <id>Q8IZP0-5</id>
        <label>ABI1</label>
    </interactant>
    <organismsDiffer>false</organismsDiffer>
    <experiments>3</experiments>
</comment>
<comment type="interaction">
    <interactant intactId="EBI-7060731">
        <id>P61978-2</id>
    </interactant>
    <interactant intactId="EBI-11096309">
        <id>Q9NYB9-2</id>
        <label>ABI2</label>
    </interactant>
    <organismsDiffer>false</organismsDiffer>
    <experiments>6</experiments>
</comment>
<comment type="interaction">
    <interactant intactId="EBI-7060731">
        <id>P61978-2</id>
    </interactant>
    <interactant intactId="EBI-12819523">
        <id>P41238</id>
        <label>APOBEC1</label>
    </interactant>
    <organismsDiffer>false</organismsDiffer>
    <experiments>3</experiments>
</comment>
<comment type="interaction">
    <interactant intactId="EBI-7060731">
        <id>P61978-2</id>
    </interactant>
    <interactant intactId="EBI-1044593">
        <id>Q9NRW3</id>
        <label>APOBEC3C</label>
    </interactant>
    <organismsDiffer>false</organismsDiffer>
    <experiments>3</experiments>
</comment>
<comment type="interaction">
    <interactant intactId="EBI-7060731">
        <id>P61978-2</id>
    </interactant>
    <interactant intactId="EBI-538850">
        <id>Q14011</id>
        <label>CIRBP</label>
    </interactant>
    <organismsDiffer>false</organismsDiffer>
    <experiments>3</experiments>
</comment>
<comment type="interaction">
    <interactant intactId="EBI-7060731">
        <id>P61978-2</id>
    </interactant>
    <interactant intactId="EBI-741032">
        <id>Q8NE01</id>
        <label>CNNM3</label>
    </interactant>
    <organismsDiffer>false</organismsDiffer>
    <experiments>3</experiments>
</comment>
<comment type="interaction">
    <interactant intactId="EBI-7060731">
        <id>P61978-2</id>
    </interactant>
    <interactant intactId="EBI-448771">
        <id>Q92608</id>
        <label>DOCK2</label>
    </interactant>
    <organismsDiffer>false</organismsDiffer>
    <experiments>3</experiments>
</comment>
<comment type="interaction">
    <interactant intactId="EBI-7060731">
        <id>P61978-2</id>
    </interactant>
    <interactant intactId="EBI-751864">
        <id>Q9NVF9</id>
        <label>ETNK2</label>
    </interactant>
    <organismsDiffer>false</organismsDiffer>
    <experiments>3</experiments>
</comment>
<comment type="interaction">
    <interactant intactId="EBI-7060731">
        <id>P61978-2</id>
    </interactant>
    <interactant intactId="EBI-11320806">
        <id>Q9NU39</id>
        <label>FOXD4L1</label>
    </interactant>
    <organismsDiffer>false</organismsDiffer>
    <experiments>5</experiments>
</comment>
<comment type="interaction">
    <interactant intactId="EBI-7060731">
        <id>P61978-2</id>
    </interactant>
    <interactant intactId="EBI-11961494">
        <id>Q6VB84</id>
        <label>FOXD4L3</label>
    </interactant>
    <organismsDiffer>false</organismsDiffer>
    <experiments>3</experiments>
</comment>
<comment type="interaction">
    <interactant intactId="EBI-7060731">
        <id>P61978-2</id>
    </interactant>
    <interactant intactId="EBI-719843">
        <id>P02008</id>
        <label>HBZ</label>
    </interactant>
    <organismsDiffer>false</organismsDiffer>
    <experiments>3</experiments>
</comment>
<comment type="interaction">
    <interactant intactId="EBI-7060731">
        <id>P61978-2</id>
    </interactant>
    <interactant intactId="EBI-7060731">
        <id>P61978-2</id>
        <label>HNRNPK</label>
    </interactant>
    <organismsDiffer>false</organismsDiffer>
    <experiments>5</experiments>
</comment>
<comment type="interaction">
    <interactant intactId="EBI-7060731">
        <id>P61978-2</id>
    </interactant>
    <interactant intactId="EBI-535849">
        <id>Q8WVV9</id>
        <label>HNRNPLL</label>
    </interactant>
    <organismsDiffer>false</organismsDiffer>
    <experiments>6</experiments>
</comment>
<comment type="interaction">
    <interactant intactId="EBI-7060731">
        <id>P61978-2</id>
    </interactant>
    <interactant intactId="EBI-12021374">
        <id>Q6NXR0</id>
        <label>IRGC</label>
    </interactant>
    <organismsDiffer>false</organismsDiffer>
    <experiments>3</experiments>
</comment>
<comment type="interaction">
    <interactant intactId="EBI-7060731">
        <id>P61978-2</id>
    </interactant>
    <interactant intactId="EBI-6426198">
        <id>Q6ZWB6</id>
        <label>KCTD8</label>
    </interactant>
    <organismsDiffer>false</organismsDiffer>
    <experiments>3</experiments>
</comment>
<comment type="interaction">
    <interactant intactId="EBI-7060731">
        <id>P61978-2</id>
    </interactant>
    <interactant intactId="EBI-742808">
        <id>Q5VWX1</id>
        <label>KHDRBS2</label>
    </interactant>
    <organismsDiffer>false</organismsDiffer>
    <experiments>4</experiments>
</comment>
<comment type="interaction">
    <interactant intactId="EBI-7060731">
        <id>P61978-2</id>
    </interactant>
    <interactant intactId="EBI-722504">
        <id>O75525</id>
        <label>KHDRBS3</label>
    </interactant>
    <organismsDiffer>false</organismsDiffer>
    <experiments>3</experiments>
</comment>
<comment type="interaction">
    <interactant intactId="EBI-7060731">
        <id>P61978-2</id>
    </interactant>
    <interactant intactId="EBI-8284732">
        <id>Q13351</id>
        <label>KLF1</label>
    </interactant>
    <organismsDiffer>false</organismsDiffer>
    <experiments>3</experiments>
</comment>
<comment type="interaction">
    <interactant intactId="EBI-7060731">
        <id>P61978-2</id>
    </interactant>
    <interactant intactId="EBI-1056930">
        <id>P36507</id>
        <label>MAP2K2</label>
    </interactant>
    <organismsDiffer>false</organismsDiffer>
    <experiments>3</experiments>
</comment>
<comment type="interaction">
    <interactant intactId="EBI-7060731">
        <id>P61978-2</id>
    </interactant>
    <interactant intactId="EBI-352602">
        <id>P43243</id>
        <label>MATR3</label>
    </interactant>
    <organismsDiffer>false</organismsDiffer>
    <experiments>4</experiments>
</comment>
<comment type="interaction">
    <interactant intactId="EBI-7060731">
        <id>P61978-2</id>
    </interactant>
    <interactant intactId="EBI-14086479">
        <id>Q8IVT4</id>
        <label>MGC50722</label>
    </interactant>
    <organismsDiffer>false</organismsDiffer>
    <experiments>3</experiments>
</comment>
<comment type="interaction">
    <interactant intactId="EBI-7060731">
        <id>P61978-2</id>
    </interactant>
    <interactant intactId="EBI-2555085">
        <id>Q8IVT2</id>
        <label>MISP</label>
    </interactant>
    <organismsDiffer>false</organismsDiffer>
    <experiments>3</experiments>
</comment>
<comment type="interaction">
    <interactant intactId="EBI-7060731">
        <id>P61978-2</id>
    </interactant>
    <interactant intactId="EBI-726059">
        <id>Q9BYD2</id>
        <label>MRPL9</label>
    </interactant>
    <organismsDiffer>false</organismsDiffer>
    <experiments>3</experiments>
</comment>
<comment type="interaction">
    <interactant intactId="EBI-7060731">
        <id>P61978-2</id>
    </interactant>
    <interactant intactId="EBI-2858213">
        <id>Q86VE0</id>
        <label>MYPOP</label>
    </interactant>
    <organismsDiffer>false</organismsDiffer>
    <experiments>3</experiments>
</comment>
<comment type="interaction">
    <interactant intactId="EBI-7060731">
        <id>P61978-2</id>
    </interactant>
    <interactant intactId="EBI-17490746">
        <id>A8MTQ0</id>
        <label>NOTO</label>
    </interactant>
    <organismsDiffer>false</organismsDiffer>
    <experiments>3</experiments>
</comment>
<comment type="interaction">
    <interactant intactId="EBI-7060731">
        <id>P61978-2</id>
    </interactant>
    <interactant intactId="EBI-748927">
        <id>Q9NQX5</id>
        <label>NPDC1</label>
    </interactant>
    <organismsDiffer>false</organismsDiffer>
    <experiments>5</experiments>
</comment>
<comment type="interaction">
    <interactant intactId="EBI-7060731">
        <id>P61978-2</id>
    </interactant>
    <interactant intactId="EBI-10329013">
        <id>Q9Y5E9</id>
        <label>PCDHB14</label>
    </interactant>
    <organismsDiffer>false</organismsDiffer>
    <experiments>3</experiments>
</comment>
<comment type="interaction">
    <interactant intactId="EBI-7060731">
        <id>P61978-2</id>
    </interactant>
    <interactant intactId="EBI-10310808">
        <id>Q9HCN3</id>
        <label>PGAP6</label>
    </interactant>
    <organismsDiffer>false</organismsDiffer>
    <experiments>3</experiments>
</comment>
<comment type="interaction">
    <interactant intactId="EBI-7060731">
        <id>P61978-2</id>
    </interactant>
    <interactant intactId="EBI-1567797">
        <id>Q8WWY3</id>
        <label>PRPF31</label>
    </interactant>
    <organismsDiffer>false</organismsDiffer>
    <experiments>8</experiments>
</comment>
<comment type="interaction">
    <interactant intactId="EBI-7060731">
        <id>P61978-2</id>
    </interactant>
    <interactant intactId="EBI-2803328">
        <id>P79522</id>
        <label>PRR3</label>
    </interactant>
    <organismsDiffer>false</organismsDiffer>
    <experiments>5</experiments>
</comment>
<comment type="interaction">
    <interactant intactId="EBI-7060731">
        <id>P61978-2</id>
    </interactant>
    <interactant intactId="EBI-945792">
        <id>Q96PU8</id>
        <label>QKI</label>
    </interactant>
    <organismsDiffer>false</organismsDiffer>
    <experiments>3</experiments>
</comment>
<comment type="interaction">
    <interactant intactId="EBI-7060731">
        <id>P61978-2</id>
    </interactant>
    <interactant intactId="EBI-744023">
        <id>Q9BTL3</id>
        <label>RAMAC</label>
    </interactant>
    <organismsDiffer>false</organismsDiffer>
    <experiments>5</experiments>
</comment>
<comment type="interaction">
    <interactant intactId="EBI-7060731">
        <id>P61978-2</id>
    </interactant>
    <interactant intactId="EBI-3437896">
        <id>Q86YV0</id>
        <label>RASAL3</label>
    </interactant>
    <organismsDiffer>false</organismsDiffer>
    <experiments>3</experiments>
</comment>
<comment type="interaction">
    <interactant intactId="EBI-7060731">
        <id>P61978-2</id>
    </interactant>
    <interactant intactId="EBI-740818">
        <id>Q9Y272</id>
        <label>RASD1</label>
    </interactant>
    <organismsDiffer>false</organismsDiffer>
    <experiments>3</experiments>
</comment>
<comment type="interaction">
    <interactant intactId="EBI-7060731">
        <id>P61978-2</id>
    </interactant>
    <interactant intactId="EBI-954272">
        <id>Q96PK6</id>
        <label>RBM14</label>
    </interactant>
    <organismsDiffer>false</organismsDiffer>
    <experiments>4</experiments>
</comment>
<comment type="interaction">
    <interactant intactId="EBI-7060731">
        <id>P61978-2</id>
    </interactant>
    <interactant intactId="EBI-2949699">
        <id>P98179</id>
        <label>RBM3</label>
    </interactant>
    <organismsDiffer>false</organismsDiffer>
    <experiments>3</experiments>
</comment>
<comment type="interaction">
    <interactant intactId="EBI-7060731">
        <id>P61978-2</id>
    </interactant>
    <interactant intactId="EBI-743526">
        <id>P38159</id>
        <label>RBMX</label>
    </interactant>
    <organismsDiffer>false</organismsDiffer>
    <experiments>8</experiments>
</comment>
<comment type="interaction">
    <interactant intactId="EBI-7060731">
        <id>P61978-2</id>
    </interactant>
    <interactant intactId="EBI-11994018">
        <id>P0DJD3-2</id>
        <label>RBMY1A1</label>
    </interactant>
    <organismsDiffer>false</organismsDiffer>
    <experiments>3</experiments>
</comment>
<comment type="interaction">
    <interactant intactId="EBI-7060731">
        <id>P61978-2</id>
    </interactant>
    <interactant intactId="EBI-8642021">
        <id>Q15415</id>
        <label>RBMY1J</label>
    </interactant>
    <organismsDiffer>false</organismsDiffer>
    <experiments>3</experiments>
</comment>
<comment type="interaction">
    <interactant intactId="EBI-7060731">
        <id>P61978-2</id>
    </interactant>
    <interactant intactId="EBI-11987469">
        <id>Q6ZRY4</id>
        <label>RBPMS2</label>
    </interactant>
    <organismsDiffer>false</organismsDiffer>
    <experiments>3</experiments>
</comment>
<comment type="interaction">
    <interactant intactId="EBI-7060731">
        <id>P61978-2</id>
    </interactant>
    <interactant intactId="EBI-2340927">
        <id>P78317</id>
        <label>RNF4</label>
    </interactant>
    <organismsDiffer>false</organismsDiffer>
    <experiments>3</experiments>
</comment>
<comment type="interaction">
    <interactant intactId="EBI-7060731">
        <id>P61978-2</id>
    </interactant>
    <interactant intactId="EBI-2855824">
        <id>Q9UNE2</id>
        <label>RPH3AL</label>
    </interactant>
    <organismsDiffer>false</organismsDiffer>
    <experiments>3</experiments>
</comment>
<comment type="interaction">
    <interactant intactId="EBI-7060731">
        <id>P61978-2</id>
    </interactant>
    <interactant intactId="EBI-10217913">
        <id>Q14D33</id>
        <label>RTP5</label>
    </interactant>
    <organismsDiffer>false</organismsDiffer>
    <experiments>5</experiments>
</comment>
<comment type="interaction">
    <interactant intactId="EBI-7060731">
        <id>P61978-2</id>
    </interactant>
    <interactant intactId="EBI-607085">
        <id>P09012</id>
        <label>SNRPA</label>
    </interactant>
    <organismsDiffer>false</organismsDiffer>
    <experiments>3</experiments>
</comment>
<comment type="interaction">
    <interactant intactId="EBI-7060731">
        <id>P61978-2</id>
    </interactant>
    <interactant intactId="EBI-741237">
        <id>O60504</id>
        <label>SORBS3</label>
    </interactant>
    <organismsDiffer>false</organismsDiffer>
    <experiments>3</experiments>
</comment>
<comment type="interaction">
    <interactant intactId="EBI-7060731">
        <id>P61978-2</id>
    </interactant>
    <interactant intactId="EBI-717201">
        <id>Q9UQ90</id>
        <label>SPG7</label>
    </interactant>
    <organismsDiffer>false</organismsDiffer>
    <experiments>3</experiments>
</comment>
<comment type="interaction">
    <interactant intactId="EBI-7060731">
        <id>P61978-2</id>
    </interactant>
    <interactant intactId="EBI-372557">
        <id>P84103</id>
        <label>SRSF3</label>
    </interactant>
    <organismsDiffer>false</organismsDiffer>
    <experiments>3</experiments>
</comment>
<comment type="interaction">
    <interactant intactId="EBI-7060731">
        <id>P61978-2</id>
    </interactant>
    <interactant intactId="EBI-372899">
        <id>Q13148</id>
        <label>TARDBP</label>
    </interactant>
    <organismsDiffer>false</organismsDiffer>
    <experiments>6</experiments>
</comment>
<comment type="interaction">
    <interactant intactId="EBI-7060731">
        <id>P61978-2</id>
    </interactant>
    <interactant intactId="EBI-12127592">
        <id>Q7RTU1</id>
        <label>TCF23</label>
    </interactant>
    <organismsDiffer>false</organismsDiffer>
    <experiments>3</experiments>
</comment>
<comment type="interaction">
    <interactant intactId="EBI-7060731">
        <id>P61978-2</id>
    </interactant>
    <interactant intactId="EBI-12001016">
        <id>P07101-3</id>
        <label>TH</label>
    </interactant>
    <organismsDiffer>false</organismsDiffer>
    <experiments>3</experiments>
</comment>
<comment type="interaction">
    <interactant intactId="EBI-7060731">
        <id>P61978-2</id>
    </interactant>
    <interactant intactId="EBI-11741437">
        <id>Q08117-2</id>
        <label>TLE5</label>
    </interactant>
    <organismsDiffer>false</organismsDiffer>
    <experiments>5</experiments>
</comment>
<comment type="interaction">
    <interactant intactId="EBI-7060731">
        <id>P61978-2</id>
    </interactant>
    <interactant intactId="EBI-366083">
        <id>P04637</id>
        <label>TP53</label>
    </interactant>
    <organismsDiffer>false</organismsDiffer>
    <experiments>2</experiments>
</comment>
<comment type="interaction">
    <interactant intactId="EBI-7060731">
        <id>P61978-2</id>
    </interactant>
    <interactant intactId="EBI-1383454">
        <id>P29597</id>
        <label>TYK2</label>
    </interactant>
    <organismsDiffer>false</organismsDiffer>
    <experiments>3</experiments>
</comment>
<comment type="interaction">
    <interactant intactId="EBI-7060731">
        <id>P61978-2</id>
    </interactant>
    <interactant intactId="EBI-10180829">
        <id>Q7KZS0</id>
        <label>UBE2I</label>
    </interactant>
    <organismsDiffer>false</organismsDiffer>
    <experiments>3</experiments>
</comment>
<comment type="interaction">
    <interactant intactId="EBI-7060731">
        <id>P61978-2</id>
    </interactant>
    <interactant intactId="EBI-2849854">
        <id>Q96MU7</id>
        <label>YTHDC1</label>
    </interactant>
    <organismsDiffer>false</organismsDiffer>
    <experiments>3</experiments>
</comment>
<comment type="interaction">
    <interactant intactId="EBI-7060731">
        <id>P61978-2</id>
    </interactant>
    <interactant intactId="EBI-347633">
        <id>Q9H9D4</id>
        <label>ZNF408</label>
    </interactant>
    <organismsDiffer>false</organismsDiffer>
    <experiments>3</experiments>
</comment>
<comment type="interaction">
    <interactant intactId="EBI-7060731">
        <id>P61978-2</id>
    </interactant>
    <interactant intactId="EBI-11035148">
        <id>Q8TF50</id>
        <label>ZNF526</label>
    </interactant>
    <organismsDiffer>false</organismsDiffer>
    <experiments>3</experiments>
</comment>
<comment type="interaction">
    <interactant intactId="EBI-7060731">
        <id>P61978-2</id>
    </interactant>
    <interactant intactId="EBI-14069183">
        <id>Q86XF7</id>
        <label>ZNF575</label>
    </interactant>
    <organismsDiffer>false</organismsDiffer>
    <experiments>5</experiments>
</comment>
<comment type="interaction">
    <interactant intactId="EBI-7060731">
        <id>P61978-2</id>
    </interactant>
    <interactant intactId="EBI-16429014">
        <id>A0A0S2Z5X4</id>
        <label>ZNF688</label>
    </interactant>
    <organismsDiffer>false</organismsDiffer>
    <experiments>3</experiments>
</comment>
<comment type="subcellular location">
    <subcellularLocation>
        <location evidence="12">Cytoplasm</location>
    </subcellularLocation>
    <subcellularLocation>
        <location evidence="10 12 13 15">Nucleus</location>
        <location evidence="10 12 13 15">Nucleoplasm</location>
    </subcellularLocation>
    <subcellularLocation>
        <location evidence="15">Cell projection</location>
        <location evidence="15">Podosome</location>
    </subcellularLocation>
    <text>Recruited to p53/TP53-responsive promoters, in the presence of functional p53/TP53 (PubMed:16360036). In case of ASFV infection, there is a shift in the localization which becomes predominantly nuclear (PubMed:18775702).</text>
</comment>
<comment type="alternative products">
    <event type="alternative splicing"/>
    <isoform>
        <id>P61978-1</id>
        <id>Q07244-1</id>
        <name>1</name>
        <sequence type="displayed"/>
    </isoform>
    <isoform>
        <id>P61978-2</id>
        <id>Q07244-2</id>
        <name>2</name>
        <sequence type="described" ref="VSP_002822"/>
    </isoform>
    <isoform>
        <id>P61978-3</id>
        <name>3</name>
        <sequence type="described" ref="VSP_021669 VSP_002822"/>
    </isoform>
</comment>
<comment type="induction">
    <text evidence="10">By DNA damage, including ionizing radiations and phleomycin treatment or UV irradiation. This induction requires ATM kinase activity (ionizing radiations and phleomycin) or ATR activity (UV irradiation). Up-regulation is due to protein stabilization. Constitutive protein levels are controlled by MDM2-mediated ubiquitination and degradation via the proteasome pathway.</text>
</comment>
<comment type="PTM">
    <text>Arg-296 and Arg-299 are dimethylated, probably to asymmetric dimethylarginine.</text>
</comment>
<comment type="PTM">
    <text evidence="11 16 23">Sumoylated by CBX4. Sumoylation is increased upon DNA damage, such as that produced by doxorubicin, etoposide, UV light and camptothecin, due to enhanced CBX4 phosphorylation by HIPK2 under these conditions.</text>
</comment>
<comment type="PTM">
    <text evidence="10 16">Ubiquitinated by MDM2. Doxorubicin treatment does not affect monoubiquitination, but slightly decreases HNRNPK poly-ubiquitination.</text>
</comment>
<comment type="PTM">
    <text evidence="17">O-glycosylated (O-GlcNAcylated), in a cell cycle-dependent manner.</text>
</comment>
<comment type="mass spectrometry" mass="50976.25" method="MALDI" evidence="6">
    <molecule>Isoform 1</molecule>
</comment>
<comment type="disease" evidence="20">
    <disease id="DI-04555">
        <name>Au-Kline syndrome</name>
        <acronym>AUKS</acronym>
        <description>A disorder characterized by intellectual disability, facial dysmorphism, cardiac defects, and connective tissue and skeletal abnormalities. Dysmorphic features include long palpebral fissures, ptosis, a broad prominent nasal bridge, hypoplastic alae nasi, an open downturned mouth, ears with underdeveloped and thick helices, high palate, and a unique tongue with a prominent median crease. Hypotonia, hyporeflexia, and high pain tolerance are additional features.</description>
        <dbReference type="MIM" id="616580"/>
    </disease>
    <text>The disease is caused by variants affecting the gene represented in this entry.</text>
</comment>
<comment type="sequence caution" evidence="28">
    <conflict type="erroneous initiation">
        <sequence resource="EMBL-CDS" id="BAD92799"/>
    </conflict>
    <text>Extended N-terminus.</text>
</comment>
<comment type="online information" name="Atlas of Genetics and Cytogenetics in Oncology and Haematology">
    <link uri="https://atlasgeneticsoncology.org/gene/44314/HNRNPK"/>
</comment>
<dbReference type="EMBL" id="S74678">
    <property type="protein sequence ID" value="AAB20770.1"/>
    <property type="molecule type" value="mRNA"/>
</dbReference>
<dbReference type="EMBL" id="X72727">
    <property type="protein sequence ID" value="CAA51267.1"/>
    <property type="molecule type" value="mRNA"/>
</dbReference>
<dbReference type="EMBL" id="CR456771">
    <property type="protein sequence ID" value="CAG33052.1"/>
    <property type="molecule type" value="mRNA"/>
</dbReference>
<dbReference type="EMBL" id="AB209562">
    <property type="protein sequence ID" value="BAD92799.1"/>
    <property type="status" value="ALT_INIT"/>
    <property type="molecule type" value="mRNA"/>
</dbReference>
<dbReference type="EMBL" id="AK291336">
    <property type="protein sequence ID" value="BAF84025.1"/>
    <property type="molecule type" value="mRNA"/>
</dbReference>
<dbReference type="EMBL" id="AB451263">
    <property type="protein sequence ID" value="BAG70077.1"/>
    <property type="molecule type" value="mRNA"/>
</dbReference>
<dbReference type="EMBL" id="AB451390">
    <property type="protein sequence ID" value="BAG70204.1"/>
    <property type="molecule type" value="mRNA"/>
</dbReference>
<dbReference type="EMBL" id="AL354733">
    <property type="status" value="NOT_ANNOTATED_CDS"/>
    <property type="molecule type" value="Genomic_DNA"/>
</dbReference>
<dbReference type="EMBL" id="CH471089">
    <property type="protein sequence ID" value="EAW62675.1"/>
    <property type="molecule type" value="Genomic_DNA"/>
</dbReference>
<dbReference type="EMBL" id="CH471089">
    <property type="protein sequence ID" value="EAW62677.1"/>
    <property type="molecule type" value="Genomic_DNA"/>
</dbReference>
<dbReference type="EMBL" id="BC000355">
    <property type="protein sequence ID" value="AAH00355.1"/>
    <property type="molecule type" value="mRNA"/>
</dbReference>
<dbReference type="EMBL" id="BC014980">
    <property type="protein sequence ID" value="AAH14980.1"/>
    <property type="molecule type" value="mRNA"/>
</dbReference>
<dbReference type="CCDS" id="CCDS6667.1"/>
<dbReference type="CCDS" id="CCDS6668.1">
    <molecule id="P61978-2"/>
</dbReference>
<dbReference type="CCDS" id="CCDS94426.1">
    <molecule id="P61978-3"/>
</dbReference>
<dbReference type="PIR" id="S43363">
    <property type="entry name" value="S43363"/>
</dbReference>
<dbReference type="RefSeq" id="NP_001305115.1">
    <property type="nucleotide sequence ID" value="NM_001318186.1"/>
</dbReference>
<dbReference type="RefSeq" id="NP_001305116.1">
    <molecule id="P61978-3"/>
    <property type="nucleotide sequence ID" value="NM_001318187.2"/>
</dbReference>
<dbReference type="RefSeq" id="NP_001305117.1">
    <molecule id="P61978-1"/>
    <property type="nucleotide sequence ID" value="NM_001318188.2"/>
</dbReference>
<dbReference type="RefSeq" id="NP_002131.2">
    <molecule id="P61978-2"/>
    <property type="nucleotide sequence ID" value="NM_002140.4"/>
</dbReference>
<dbReference type="RefSeq" id="NP_112552.1">
    <molecule id="P61978-1"/>
    <property type="nucleotide sequence ID" value="NM_031262.4"/>
</dbReference>
<dbReference type="RefSeq" id="NP_112553.1">
    <molecule id="P61978-2"/>
    <property type="nucleotide sequence ID" value="NM_031263.4"/>
</dbReference>
<dbReference type="RefSeq" id="XP_005252017.1">
    <molecule id="P61978-2"/>
    <property type="nucleotide sequence ID" value="XM_005251960.3"/>
</dbReference>
<dbReference type="RefSeq" id="XP_005252020.1">
    <molecule id="P61978-3"/>
    <property type="nucleotide sequence ID" value="XM_005251963.5"/>
</dbReference>
<dbReference type="RefSeq" id="XP_005252022.1">
    <molecule id="P61978-3"/>
    <property type="nucleotide sequence ID" value="XM_005251965.4"/>
</dbReference>
<dbReference type="RefSeq" id="XP_016870157.1">
    <property type="nucleotide sequence ID" value="XM_017014668.1"/>
</dbReference>
<dbReference type="RefSeq" id="XP_054218830.1">
    <molecule id="P61978-2"/>
    <property type="nucleotide sequence ID" value="XM_054362855.1"/>
</dbReference>
<dbReference type="RefSeq" id="XP_054218831.1">
    <molecule id="P61978-3"/>
    <property type="nucleotide sequence ID" value="XM_054362856.1"/>
</dbReference>
<dbReference type="RefSeq" id="XP_054218832.1">
    <molecule id="P61978-3"/>
    <property type="nucleotide sequence ID" value="XM_054362857.1"/>
</dbReference>
<dbReference type="PDB" id="1J5K">
    <property type="method" value="NMR"/>
    <property type="chains" value="A=379-463"/>
</dbReference>
<dbReference type="PDB" id="1KHM">
    <property type="method" value="NMR"/>
    <property type="chains" value="A=379-463"/>
</dbReference>
<dbReference type="PDB" id="1ZZI">
    <property type="method" value="X-ray"/>
    <property type="resolution" value="1.80 A"/>
    <property type="chains" value="A/B=385-463"/>
</dbReference>
<dbReference type="PDB" id="1ZZJ">
    <property type="method" value="X-ray"/>
    <property type="resolution" value="2.30 A"/>
    <property type="chains" value="A/B/C=385-463"/>
</dbReference>
<dbReference type="PDB" id="1ZZK">
    <property type="method" value="X-ray"/>
    <property type="resolution" value="0.95 A"/>
    <property type="chains" value="A=385-463"/>
</dbReference>
<dbReference type="PDB" id="7CRE">
    <property type="method" value="X-ray"/>
    <property type="resolution" value="3.00 A"/>
    <property type="chains" value="A=382-457"/>
</dbReference>
<dbReference type="PDB" id="7CRU">
    <property type="method" value="X-ray"/>
    <property type="resolution" value="2.80 A"/>
    <property type="chains" value="B/D=18-38"/>
</dbReference>
<dbReference type="PDB" id="7RJK">
    <property type="method" value="X-ray"/>
    <property type="resolution" value="1.85 A"/>
    <property type="chains" value="C/D=57-66"/>
</dbReference>
<dbReference type="PDB" id="7RJO">
    <property type="method" value="X-ray"/>
    <property type="resolution" value="1.38 A"/>
    <property type="chains" value="B=57-66"/>
</dbReference>
<dbReference type="PDBsum" id="1J5K"/>
<dbReference type="PDBsum" id="1KHM"/>
<dbReference type="PDBsum" id="1ZZI"/>
<dbReference type="PDBsum" id="1ZZJ"/>
<dbReference type="PDBsum" id="1ZZK"/>
<dbReference type="PDBsum" id="7CRE"/>
<dbReference type="PDBsum" id="7CRU"/>
<dbReference type="PDBsum" id="7RJK"/>
<dbReference type="PDBsum" id="7RJO"/>
<dbReference type="SMR" id="P61978"/>
<dbReference type="BioGRID" id="109431">
    <property type="interactions" value="755"/>
</dbReference>
<dbReference type="CORUM" id="P61978"/>
<dbReference type="DIP" id="DIP-31805N"/>
<dbReference type="FunCoup" id="P61978">
    <property type="interactions" value="3765"/>
</dbReference>
<dbReference type="IntAct" id="P61978">
    <property type="interactions" value="286"/>
</dbReference>
<dbReference type="MINT" id="P61978"/>
<dbReference type="STRING" id="9606.ENSP00000365458"/>
<dbReference type="DrugBank" id="DB11638">
    <property type="generic name" value="Artenimol"/>
</dbReference>
<dbReference type="DrugBank" id="DB12695">
    <property type="generic name" value="Phenethyl Isothiocyanate"/>
</dbReference>
<dbReference type="MoonDB" id="P61978">
    <property type="type" value="Predicted"/>
</dbReference>
<dbReference type="GlyCosmos" id="P61978">
    <property type="glycosylation" value="2 sites, 1 glycan"/>
</dbReference>
<dbReference type="GlyGen" id="P61978">
    <property type="glycosylation" value="6 sites, 1 N-linked glycan (1 site), 1 O-linked glycan (3 sites)"/>
</dbReference>
<dbReference type="iPTMnet" id="P61978"/>
<dbReference type="MetOSite" id="P61978"/>
<dbReference type="PhosphoSitePlus" id="P61978"/>
<dbReference type="SwissPalm" id="P61978"/>
<dbReference type="BioMuta" id="HNRNPK"/>
<dbReference type="DMDM" id="48429103"/>
<dbReference type="CPTAC" id="CPTAC-1028"/>
<dbReference type="jPOST" id="P61978"/>
<dbReference type="MassIVE" id="P61978"/>
<dbReference type="PaxDb" id="9606-ENSP00000365439"/>
<dbReference type="PeptideAtlas" id="P61978"/>
<dbReference type="PRIDE" id="P61978"/>
<dbReference type="ProteomicsDB" id="57352"/>
<dbReference type="ProteomicsDB" id="57353">
    <molecule id="P61978-2"/>
</dbReference>
<dbReference type="ProteomicsDB" id="57354">
    <molecule id="P61978-3"/>
</dbReference>
<dbReference type="Pumba" id="P61978"/>
<dbReference type="TopDownProteomics" id="P61978-1">
    <molecule id="P61978-1"/>
</dbReference>
<dbReference type="Antibodypedia" id="2214">
    <property type="antibodies" value="622 antibodies from 41 providers"/>
</dbReference>
<dbReference type="DNASU" id="3190"/>
<dbReference type="Ensembl" id="ENST00000351839.7">
    <molecule id="P61978-1"/>
    <property type="protein sequence ID" value="ENSP00000317788.4"/>
    <property type="gene ID" value="ENSG00000165119.22"/>
</dbReference>
<dbReference type="Ensembl" id="ENST00000360384.9">
    <molecule id="P61978-1"/>
    <property type="protein sequence ID" value="ENSP00000353552.5"/>
    <property type="gene ID" value="ENSG00000165119.22"/>
</dbReference>
<dbReference type="Ensembl" id="ENST00000376263.8">
    <molecule id="P61978-2"/>
    <property type="protein sequence ID" value="ENSP00000365439.3"/>
    <property type="gene ID" value="ENSG00000165119.22"/>
</dbReference>
<dbReference type="Ensembl" id="ENST00000376281.8">
    <molecule id="P61978-2"/>
    <property type="protein sequence ID" value="ENSP00000365458.4"/>
    <property type="gene ID" value="ENSG00000165119.22"/>
</dbReference>
<dbReference type="Ensembl" id="ENST00000457156.6">
    <molecule id="P61978-3"/>
    <property type="protein sequence ID" value="ENSP00000409456.2"/>
    <property type="gene ID" value="ENSG00000165119.22"/>
</dbReference>
<dbReference type="Ensembl" id="ENST00000704004.1">
    <molecule id="P61978-3"/>
    <property type="protein sequence ID" value="ENSP00000515617.1"/>
    <property type="gene ID" value="ENSG00000165119.22"/>
</dbReference>
<dbReference type="Ensembl" id="ENST00000704005.1">
    <molecule id="P61978-2"/>
    <property type="protein sequence ID" value="ENSP00000515618.1"/>
    <property type="gene ID" value="ENSG00000165119.22"/>
</dbReference>
<dbReference type="Ensembl" id="ENST00000704006.1">
    <molecule id="P61978-1"/>
    <property type="protein sequence ID" value="ENSP00000515619.1"/>
    <property type="gene ID" value="ENSG00000165119.22"/>
</dbReference>
<dbReference type="Ensembl" id="ENST00000704011.1">
    <molecule id="P61978-2"/>
    <property type="protein sequence ID" value="ENSP00000515624.1"/>
    <property type="gene ID" value="ENSG00000165119.22"/>
</dbReference>
<dbReference type="Ensembl" id="ENST00000704051.1">
    <molecule id="P61978-1"/>
    <property type="protein sequence ID" value="ENSP00000515654.1"/>
    <property type="gene ID" value="ENSG00000165119.22"/>
</dbReference>
<dbReference type="Ensembl" id="ENST00000704052.1">
    <molecule id="P61978-1"/>
    <property type="protein sequence ID" value="ENSP00000515655.1"/>
    <property type="gene ID" value="ENSG00000165119.22"/>
</dbReference>
<dbReference type="Ensembl" id="ENST00000704053.1">
    <molecule id="P61978-1"/>
    <property type="protein sequence ID" value="ENSP00000515656.1"/>
    <property type="gene ID" value="ENSG00000165119.22"/>
</dbReference>
<dbReference type="Ensembl" id="ENST00000704057.1">
    <molecule id="P61978-2"/>
    <property type="protein sequence ID" value="ENSP00000515660.1"/>
    <property type="gene ID" value="ENSG00000165119.22"/>
</dbReference>
<dbReference type="Ensembl" id="ENST00000704058.1">
    <molecule id="P61978-1"/>
    <property type="protein sequence ID" value="ENSP00000515661.1"/>
    <property type="gene ID" value="ENSG00000165119.22"/>
</dbReference>
<dbReference type="Ensembl" id="ENST00000704059.1">
    <molecule id="P61978-2"/>
    <property type="protein sequence ID" value="ENSP00000515662.1"/>
    <property type="gene ID" value="ENSG00000165119.22"/>
</dbReference>
<dbReference type="GeneID" id="3190"/>
<dbReference type="KEGG" id="hsa:3190"/>
<dbReference type="MANE-Select" id="ENST00000376263.8">
    <molecule id="P61978-2"/>
    <property type="protein sequence ID" value="ENSP00000365439.3"/>
    <property type="RefSeq nucleotide sequence ID" value="NM_031263.4"/>
    <property type="RefSeq protein sequence ID" value="NP_112553.1"/>
</dbReference>
<dbReference type="UCSC" id="uc004anf.5">
    <property type="organism name" value="human"/>
</dbReference>
<dbReference type="UCSC" id="uc004ang.5">
    <property type="organism name" value="human"/>
</dbReference>
<dbReference type="AGR" id="HGNC:5044"/>
<dbReference type="CTD" id="3190"/>
<dbReference type="DisGeNET" id="3190"/>
<dbReference type="GeneCards" id="HNRNPK"/>
<dbReference type="GeneReviews" id="HNRNPK"/>
<dbReference type="HGNC" id="HGNC:5044">
    <property type="gene designation" value="HNRNPK"/>
</dbReference>
<dbReference type="HPA" id="ENSG00000165119">
    <property type="expression patterns" value="Low tissue specificity"/>
</dbReference>
<dbReference type="MalaCards" id="HNRNPK"/>
<dbReference type="MIM" id="600712">
    <property type="type" value="gene"/>
</dbReference>
<dbReference type="MIM" id="616580">
    <property type="type" value="phenotype"/>
</dbReference>
<dbReference type="neXtProt" id="NX_P61978"/>
<dbReference type="OpenTargets" id="ENSG00000165119"/>
<dbReference type="Orphanet" id="352665">
    <property type="disease" value="Neurodevelopmental disorder-craniofacial dysmorphism-cardiac defect-skeletal anomalies syndrome due to 9q21.3 microdeletion"/>
</dbReference>
<dbReference type="Orphanet" id="453504">
    <property type="disease" value="Neurodevelopmental disorder-craniofacial dysmorphism-cardiac defect-skeletal anomalies syndrome due to a point mutation"/>
</dbReference>
<dbReference type="PharmGKB" id="PA162391350"/>
<dbReference type="VEuPathDB" id="HostDB:ENSG00000165119"/>
<dbReference type="eggNOG" id="KOG2192">
    <property type="taxonomic scope" value="Eukaryota"/>
</dbReference>
<dbReference type="GeneTree" id="ENSGT00940000153434"/>
<dbReference type="InParanoid" id="P61978"/>
<dbReference type="OMA" id="KALRTDX"/>
<dbReference type="OrthoDB" id="1937934at2759"/>
<dbReference type="PAN-GO" id="P61978">
    <property type="GO annotations" value="5 GO annotations based on evolutionary models"/>
</dbReference>
<dbReference type="PhylomeDB" id="P61978"/>
<dbReference type="TreeFam" id="TF316335"/>
<dbReference type="PathwayCommons" id="P61978"/>
<dbReference type="Reactome" id="R-HSA-4570464">
    <property type="pathway name" value="SUMOylation of RNA binding proteins"/>
</dbReference>
<dbReference type="Reactome" id="R-HSA-72163">
    <property type="pathway name" value="mRNA Splicing - Major Pathway"/>
</dbReference>
<dbReference type="Reactome" id="R-HSA-72203">
    <property type="pathway name" value="Processing of Capped Intron-Containing Pre-mRNA"/>
</dbReference>
<dbReference type="Reactome" id="R-HSA-9610379">
    <property type="pathway name" value="HCMV Late Events"/>
</dbReference>
<dbReference type="SignaLink" id="P61978"/>
<dbReference type="SIGNOR" id="P61978"/>
<dbReference type="BioGRID-ORCS" id="3190">
    <property type="hits" value="838 hits in 1161 CRISPR screens"/>
</dbReference>
<dbReference type="CD-CODE" id="1A18FFC4">
    <property type="entry name" value="Paraspeckle"/>
</dbReference>
<dbReference type="CD-CODE" id="62EA6512">
    <property type="entry name" value="Sam68 nuclear body"/>
</dbReference>
<dbReference type="CD-CODE" id="804901D1">
    <property type="entry name" value="Nuclear speckle"/>
</dbReference>
<dbReference type="CD-CODE" id="91857CE7">
    <property type="entry name" value="Nucleolus"/>
</dbReference>
<dbReference type="CD-CODE" id="DEE660B4">
    <property type="entry name" value="Stress granule"/>
</dbReference>
<dbReference type="CD-CODE" id="FB4E32DD">
    <property type="entry name" value="Presynaptic clusters and postsynaptic densities"/>
</dbReference>
<dbReference type="ChiTaRS" id="HNRNPK">
    <property type="organism name" value="human"/>
</dbReference>
<dbReference type="EvolutionaryTrace" id="P61978"/>
<dbReference type="GeneWiki" id="HNRPK"/>
<dbReference type="GenomeRNAi" id="3190"/>
<dbReference type="Pharos" id="P61978">
    <property type="development level" value="Tbio"/>
</dbReference>
<dbReference type="PRO" id="PR:P61978"/>
<dbReference type="Proteomes" id="UP000005640">
    <property type="component" value="Chromosome 9"/>
</dbReference>
<dbReference type="RNAct" id="P61978">
    <property type="molecule type" value="protein"/>
</dbReference>
<dbReference type="Bgee" id="ENSG00000165119">
    <property type="expression patterns" value="Expressed in calcaneal tendon and 102 other cell types or tissues"/>
</dbReference>
<dbReference type="ExpressionAtlas" id="P61978">
    <property type="expression patterns" value="baseline and differential"/>
</dbReference>
<dbReference type="GO" id="GO:0071013">
    <property type="term" value="C:catalytic step 2 spliceosome"/>
    <property type="evidence" value="ECO:0000314"/>
    <property type="project" value="UniProtKB"/>
</dbReference>
<dbReference type="GO" id="GO:0042995">
    <property type="term" value="C:cell projection"/>
    <property type="evidence" value="ECO:0007669"/>
    <property type="project" value="UniProtKB-KW"/>
</dbReference>
<dbReference type="GO" id="GO:0000785">
    <property type="term" value="C:chromatin"/>
    <property type="evidence" value="ECO:0000314"/>
    <property type="project" value="UniProtKB"/>
</dbReference>
<dbReference type="GO" id="GO:0005737">
    <property type="term" value="C:cytoplasm"/>
    <property type="evidence" value="ECO:0000314"/>
    <property type="project" value="UniProtKB"/>
</dbReference>
<dbReference type="GO" id="GO:0010494">
    <property type="term" value="C:cytoplasmic stress granule"/>
    <property type="evidence" value="ECO:0000250"/>
    <property type="project" value="ARUK-UCL"/>
</dbReference>
<dbReference type="GO" id="GO:0070062">
    <property type="term" value="C:extracellular exosome"/>
    <property type="evidence" value="ECO:0007005"/>
    <property type="project" value="UniProtKB"/>
</dbReference>
<dbReference type="GO" id="GO:0005925">
    <property type="term" value="C:focal adhesion"/>
    <property type="evidence" value="ECO:0007005"/>
    <property type="project" value="UniProtKB"/>
</dbReference>
<dbReference type="GO" id="GO:0016020">
    <property type="term" value="C:membrane"/>
    <property type="evidence" value="ECO:0007005"/>
    <property type="project" value="UniProtKB"/>
</dbReference>
<dbReference type="GO" id="GO:0005654">
    <property type="term" value="C:nucleoplasm"/>
    <property type="evidence" value="ECO:0000314"/>
    <property type="project" value="HPA"/>
</dbReference>
<dbReference type="GO" id="GO:0005634">
    <property type="term" value="C:nucleus"/>
    <property type="evidence" value="ECO:0000314"/>
    <property type="project" value="UniProtKB"/>
</dbReference>
<dbReference type="GO" id="GO:0002102">
    <property type="term" value="C:podosome"/>
    <property type="evidence" value="ECO:0007669"/>
    <property type="project" value="UniProtKB-SubCell"/>
</dbReference>
<dbReference type="GO" id="GO:1990904">
    <property type="term" value="C:ribonucleoprotein complex"/>
    <property type="evidence" value="ECO:0000314"/>
    <property type="project" value="UniProtKB"/>
</dbReference>
<dbReference type="GO" id="GO:0045296">
    <property type="term" value="F:cadherin binding"/>
    <property type="evidence" value="ECO:0007005"/>
    <property type="project" value="BHF-UCL"/>
</dbReference>
<dbReference type="GO" id="GO:0003677">
    <property type="term" value="F:DNA binding"/>
    <property type="evidence" value="ECO:0007669"/>
    <property type="project" value="UniProtKB-KW"/>
</dbReference>
<dbReference type="GO" id="GO:0042802">
    <property type="term" value="F:identical protein binding"/>
    <property type="evidence" value="ECO:0000353"/>
    <property type="project" value="IntAct"/>
</dbReference>
<dbReference type="GO" id="GO:0003729">
    <property type="term" value="F:mRNA binding"/>
    <property type="evidence" value="ECO:0000318"/>
    <property type="project" value="GO_Central"/>
</dbReference>
<dbReference type="GO" id="GO:0019904">
    <property type="term" value="F:protein domain specific binding"/>
    <property type="evidence" value="ECO:0000353"/>
    <property type="project" value="UniProtKB"/>
</dbReference>
<dbReference type="GO" id="GO:0003723">
    <property type="term" value="F:RNA binding"/>
    <property type="evidence" value="ECO:0007005"/>
    <property type="project" value="UniProtKB"/>
</dbReference>
<dbReference type="GO" id="GO:0000398">
    <property type="term" value="P:mRNA splicing, via spliceosome"/>
    <property type="evidence" value="ECO:0000305"/>
    <property type="project" value="UniProtKB"/>
</dbReference>
<dbReference type="GO" id="GO:0043066">
    <property type="term" value="P:negative regulation of apoptotic process"/>
    <property type="evidence" value="ECO:0000315"/>
    <property type="project" value="MGI"/>
</dbReference>
<dbReference type="GO" id="GO:0045892">
    <property type="term" value="P:negative regulation of DNA-templated transcription"/>
    <property type="evidence" value="ECO:0000315"/>
    <property type="project" value="UniProtKB"/>
</dbReference>
<dbReference type="GO" id="GO:0048025">
    <property type="term" value="P:negative regulation of mRNA splicing, via spliceosome"/>
    <property type="evidence" value="ECO:0007669"/>
    <property type="project" value="Ensembl"/>
</dbReference>
<dbReference type="GO" id="GO:1905581">
    <property type="term" value="P:positive regulation of low-density lipoprotein particle clearance"/>
    <property type="evidence" value="ECO:0000315"/>
    <property type="project" value="BHF-UCL"/>
</dbReference>
<dbReference type="GO" id="GO:0045944">
    <property type="term" value="P:positive regulation of transcription by RNA polymerase II"/>
    <property type="evidence" value="ECO:0007669"/>
    <property type="project" value="Ensembl"/>
</dbReference>
<dbReference type="GO" id="GO:0060816">
    <property type="term" value="P:random inactivation of X chromosome"/>
    <property type="evidence" value="ECO:0000314"/>
    <property type="project" value="FlyBase"/>
</dbReference>
<dbReference type="GO" id="GO:1902165">
    <property type="term" value="P:regulation of intrinsic apoptotic signaling pathway in response to DNA damage by p53 class mediator"/>
    <property type="evidence" value="ECO:0007669"/>
    <property type="project" value="Ensembl"/>
</dbReference>
<dbReference type="GO" id="GO:0048024">
    <property type="term" value="P:regulation of mRNA splicing, via spliceosome"/>
    <property type="evidence" value="ECO:0000318"/>
    <property type="project" value="GO_Central"/>
</dbReference>
<dbReference type="GO" id="GO:0006357">
    <property type="term" value="P:regulation of transcription by RNA polymerase II"/>
    <property type="evidence" value="ECO:0000318"/>
    <property type="project" value="GO_Central"/>
</dbReference>
<dbReference type="GO" id="GO:0031048">
    <property type="term" value="P:regulatory ncRNA-mediated heterochromatin formation"/>
    <property type="evidence" value="ECO:0000315"/>
    <property type="project" value="FlyBase"/>
</dbReference>
<dbReference type="GO" id="GO:0006396">
    <property type="term" value="P:RNA processing"/>
    <property type="evidence" value="ECO:0000304"/>
    <property type="project" value="ProtInc"/>
</dbReference>
<dbReference type="GO" id="GO:0007165">
    <property type="term" value="P:signal transduction"/>
    <property type="evidence" value="ECO:0000304"/>
    <property type="project" value="ProtInc"/>
</dbReference>
<dbReference type="CDD" id="cd22432">
    <property type="entry name" value="KH-I_HNRNPK_rpt1"/>
    <property type="match status" value="1"/>
</dbReference>
<dbReference type="CDD" id="cd22433">
    <property type="entry name" value="KH-I_HNRNPK_rpt2"/>
    <property type="match status" value="1"/>
</dbReference>
<dbReference type="CDD" id="cd22434">
    <property type="entry name" value="KH-I_HNRNPK_rpt3"/>
    <property type="match status" value="1"/>
</dbReference>
<dbReference type="FunFam" id="3.30.1370.10:FF:000021">
    <property type="entry name" value="Heterogeneous nuclear ribonucleoprotein K, like"/>
    <property type="match status" value="1"/>
</dbReference>
<dbReference type="FunFam" id="3.30.1370.10:FF:000023">
    <property type="entry name" value="Heterogeneous nuclear ribonucleoprotein K, like"/>
    <property type="match status" value="1"/>
</dbReference>
<dbReference type="FunFam" id="3.30.1370.10:FF:000025">
    <property type="entry name" value="Heterogeneous nuclear ribonucleoprotein K, like"/>
    <property type="match status" value="1"/>
</dbReference>
<dbReference type="Gene3D" id="3.30.1370.10">
    <property type="entry name" value="K Homology domain, type 1"/>
    <property type="match status" value="3"/>
</dbReference>
<dbReference type="InterPro" id="IPR004087">
    <property type="entry name" value="KH_dom"/>
</dbReference>
<dbReference type="InterPro" id="IPR004088">
    <property type="entry name" value="KH_dom_type_1"/>
</dbReference>
<dbReference type="InterPro" id="IPR036612">
    <property type="entry name" value="KH_dom_type_1_sf"/>
</dbReference>
<dbReference type="InterPro" id="IPR012987">
    <property type="entry name" value="ROK_N"/>
</dbReference>
<dbReference type="PANTHER" id="PTHR10288">
    <property type="entry name" value="KH DOMAIN CONTAINING RNA BINDING PROTEIN"/>
    <property type="match status" value="1"/>
</dbReference>
<dbReference type="Pfam" id="PF00013">
    <property type="entry name" value="KH_1"/>
    <property type="match status" value="3"/>
</dbReference>
<dbReference type="Pfam" id="PF08067">
    <property type="entry name" value="ROKNT"/>
    <property type="match status" value="1"/>
</dbReference>
<dbReference type="SMART" id="SM00322">
    <property type="entry name" value="KH"/>
    <property type="match status" value="3"/>
</dbReference>
<dbReference type="SUPFAM" id="SSF54791">
    <property type="entry name" value="Eukaryotic type KH-domain (KH-domain type I)"/>
    <property type="match status" value="3"/>
</dbReference>
<dbReference type="PROSITE" id="PS50084">
    <property type="entry name" value="KH_TYPE_1"/>
    <property type="match status" value="3"/>
</dbReference>
<sequence length="463" mass="50976">METEQPEETFPNTETNGEFGKRPAEDMEEEQAFKRSRNTDEMVELRILLQSKNAGAVIGKGGKNIKALRTDYNASVSVPDSSGPERILSISADIETIGEILKKIIPTLEEGLQLPSPTATSQLPLESDAVECLNYQHYKGSDFDCELRLLIHQSLAGGIIGVKGAKIKELRENTQTTIKLFQECCPHSTDRVVLIGGKPDRVVECIKIILDLISESPIKGRAQPYDPNFYDETYDYGGFTMMFDDRRGRPVGFPMRGRGGFDRMPPGRGGRPMPPSRRDYDDMSPRRGPPPPPPGRGGRGGSRARNLPLPPPPPPRGGDLMAYDRRGRPGDRYDGMVGFSADETWDSAIDTWSPSEWQMAYEPQGGSGYDYSYAGGRGSYGDLGGPIITTQVTIPKDLAGSIIGKGGQRIKQIRHESGASIKIDEPLEGSEDRIITITGTQDQIQNAQYLLQNSVKQYSGKFF</sequence>
<name>HNRPK_HUMAN</name>
<protein>
    <recommendedName>
        <fullName>Heterogeneous nuclear ribonucleoprotein K</fullName>
        <shortName>hnRNP K</shortName>
    </recommendedName>
    <alternativeName>
        <fullName>Transformation up-regulated nuclear protein</fullName>
        <shortName>TUNP</shortName>
    </alternativeName>
</protein>
<keyword id="KW-0002">3D-structure</keyword>
<keyword id="KW-0007">Acetylation</keyword>
<keyword id="KW-0010">Activator</keyword>
<keyword id="KW-0025">Alternative splicing</keyword>
<keyword id="KW-0965">Cell junction</keyword>
<keyword id="KW-0966">Cell projection</keyword>
<keyword id="KW-0963">Cytoplasm</keyword>
<keyword id="KW-0903">Direct protein sequencing</keyword>
<keyword id="KW-0238">DNA-binding</keyword>
<keyword id="KW-0325">Glycoprotein</keyword>
<keyword id="KW-0945">Host-virus interaction</keyword>
<keyword id="KW-0991">Intellectual disability</keyword>
<keyword id="KW-1017">Isopeptide bond</keyword>
<keyword id="KW-0488">Methylation</keyword>
<keyword id="KW-0507">mRNA processing</keyword>
<keyword id="KW-0508">mRNA splicing</keyword>
<keyword id="KW-0539">Nucleus</keyword>
<keyword id="KW-0597">Phosphoprotein</keyword>
<keyword id="KW-1267">Proteomics identification</keyword>
<keyword id="KW-1185">Reference proteome</keyword>
<keyword id="KW-0677">Repeat</keyword>
<keyword id="KW-0678">Repressor</keyword>
<keyword id="KW-0687">Ribonucleoprotein</keyword>
<keyword id="KW-0694">RNA-binding</keyword>
<keyword id="KW-0747">Spliceosome</keyword>
<keyword id="KW-0804">Transcription</keyword>
<keyword id="KW-0805">Transcription regulation</keyword>
<keyword id="KW-0832">Ubl conjugation</keyword>
<evidence type="ECO:0000250" key="1"/>
<evidence type="ECO:0000250" key="2">
    <source>
        <dbReference type="UniProtKB" id="P61979"/>
    </source>
</evidence>
<evidence type="ECO:0000250" key="3">
    <source>
        <dbReference type="UniProtKB" id="P61980"/>
    </source>
</evidence>
<evidence type="ECO:0000255" key="4">
    <source>
        <dbReference type="PROSITE-ProRule" id="PRU00117"/>
    </source>
</evidence>
<evidence type="ECO:0000256" key="5">
    <source>
        <dbReference type="SAM" id="MobiDB-lite"/>
    </source>
</evidence>
<evidence type="ECO:0000269" key="6">
    <source>
    </source>
</evidence>
<evidence type="ECO:0000269" key="7">
    <source>
    </source>
</evidence>
<evidence type="ECO:0000269" key="8">
    <source>
    </source>
</evidence>
<evidence type="ECO:0000269" key="9">
    <source>
    </source>
</evidence>
<evidence type="ECO:0000269" key="10">
    <source>
    </source>
</evidence>
<evidence type="ECO:0000269" key="11">
    <source>
    </source>
</evidence>
<evidence type="ECO:0000269" key="12">
    <source>
    </source>
</evidence>
<evidence type="ECO:0000269" key="13">
    <source>
    </source>
</evidence>
<evidence type="ECO:0000269" key="14">
    <source>
    </source>
</evidence>
<evidence type="ECO:0000269" key="15">
    <source>
    </source>
</evidence>
<evidence type="ECO:0000269" key="16">
    <source>
    </source>
</evidence>
<evidence type="ECO:0000269" key="17">
    <source>
    </source>
</evidence>
<evidence type="ECO:0000269" key="18">
    <source>
    </source>
</evidence>
<evidence type="ECO:0000269" key="19">
    <source>
    </source>
</evidence>
<evidence type="ECO:0000269" key="20">
    <source>
    </source>
</evidence>
<evidence type="ECO:0000269" key="21">
    <source>
    </source>
</evidence>
<evidence type="ECO:0000269" key="22">
    <source>
    </source>
</evidence>
<evidence type="ECO:0000269" key="23">
    <source>
    </source>
</evidence>
<evidence type="ECO:0000269" key="24">
    <source>
    </source>
</evidence>
<evidence type="ECO:0000269" key="25">
    <source ref="10"/>
</evidence>
<evidence type="ECO:0000303" key="26">
    <source>
    </source>
</evidence>
<evidence type="ECO:0000303" key="27">
    <source ref="4"/>
</evidence>
<evidence type="ECO:0000305" key="28"/>
<evidence type="ECO:0007744" key="29">
    <source>
    </source>
</evidence>
<evidence type="ECO:0007744" key="30">
    <source>
    </source>
</evidence>
<evidence type="ECO:0007744" key="31">
    <source>
    </source>
</evidence>
<evidence type="ECO:0007744" key="32">
    <source>
    </source>
</evidence>
<evidence type="ECO:0007744" key="33">
    <source>
    </source>
</evidence>
<evidence type="ECO:0007744" key="34">
    <source>
    </source>
</evidence>
<evidence type="ECO:0007744" key="35">
    <source>
    </source>
</evidence>
<evidence type="ECO:0007744" key="36">
    <source>
    </source>
</evidence>
<evidence type="ECO:0007744" key="37">
    <source>
    </source>
</evidence>
<evidence type="ECO:0007744" key="38">
    <source>
    </source>
</evidence>
<evidence type="ECO:0007744" key="39">
    <source>
    </source>
</evidence>
<evidence type="ECO:0007744" key="40">
    <source>
    </source>
</evidence>
<evidence type="ECO:0007744" key="41">
    <source>
    </source>
</evidence>
<evidence type="ECO:0007744" key="42">
    <source>
    </source>
</evidence>
<evidence type="ECO:0007744" key="43">
    <source>
    </source>
</evidence>
<evidence type="ECO:0007829" key="44">
    <source>
        <dbReference type="PDB" id="1KHM"/>
    </source>
</evidence>
<evidence type="ECO:0007829" key="45">
    <source>
        <dbReference type="PDB" id="1ZZK"/>
    </source>
</evidence>